<accession>P0C6Y2</accession>
<accession>Q91QT2</accession>
<gene>
    <name type="primary">rep</name>
    <name type="ORF">1a-1b</name>
</gene>
<keyword id="KW-1072">Activation of host autophagy by virus</keyword>
<keyword id="KW-0067">ATP-binding</keyword>
<keyword id="KW-1015">Disulfide bond</keyword>
<keyword id="KW-0255">Endonuclease</keyword>
<keyword id="KW-0269">Exonuclease</keyword>
<keyword id="KW-0347">Helicase</keyword>
<keyword id="KW-1035">Host cytoplasm</keyword>
<keyword id="KW-1038">Host endoplasmic reticulum</keyword>
<keyword id="KW-1043">Host membrane</keyword>
<keyword id="KW-0945">Host-virus interaction</keyword>
<keyword id="KW-0378">Hydrolase</keyword>
<keyword id="KW-0456">Lyase</keyword>
<keyword id="KW-0472">Membrane</keyword>
<keyword id="KW-0479">Metal-binding</keyword>
<keyword id="KW-0489">Methyltransferase</keyword>
<keyword id="KW-0540">Nuclease</keyword>
<keyword id="KW-0547">Nucleotide-binding</keyword>
<keyword id="KW-0548">Nucleotidyltransferase</keyword>
<keyword id="KW-0645">Protease</keyword>
<keyword id="KW-0677">Repeat</keyword>
<keyword id="KW-0688">Ribosomal frameshifting</keyword>
<keyword id="KW-0694">RNA-binding</keyword>
<keyword id="KW-0696">RNA-directed RNA polymerase</keyword>
<keyword id="KW-0788">Thiol protease</keyword>
<keyword id="KW-0808">Transferase</keyword>
<keyword id="KW-0812">Transmembrane</keyword>
<keyword id="KW-1133">Transmembrane helix</keyword>
<keyword id="KW-0693">Viral RNA replication</keyword>
<keyword id="KW-0862">Zinc</keyword>
<keyword id="KW-0863">Zinc-finger</keyword>
<dbReference type="EC" id="3.4.19.12" evidence="2"/>
<dbReference type="EC" id="3.4.22.-" evidence="2"/>
<dbReference type="EC" id="2.7.7.48"/>
<dbReference type="EC" id="2.7.7.50"/>
<dbReference type="EC" id="3.6.4.12" evidence="2"/>
<dbReference type="EC" id="3.6.4.13" evidence="2"/>
<dbReference type="EC" id="2.1.1.-"/>
<dbReference type="EC" id="3.1.13.-"/>
<dbReference type="EC" id="4.6.1.-" evidence="2"/>
<dbReference type="EC" id="2.1.1.57"/>
<dbReference type="EMBL" id="AJ311317">
    <property type="protein sequence ID" value="CAC39112.1"/>
    <property type="status" value="ALT_SEQ"/>
    <property type="molecule type" value="Genomic_RNA"/>
</dbReference>
<dbReference type="SMR" id="P0C6Y2"/>
<dbReference type="BindingDB" id="P0C6Y2"/>
<dbReference type="MEROPS" id="C30.002"/>
<dbReference type="Proteomes" id="UP000114388">
    <property type="component" value="Genome"/>
</dbReference>
<dbReference type="GO" id="GO:0044167">
    <property type="term" value="C:host cell endoplasmic reticulum membrane"/>
    <property type="evidence" value="ECO:0007669"/>
    <property type="project" value="UniProtKB-SubCell"/>
</dbReference>
<dbReference type="GO" id="GO:0044172">
    <property type="term" value="C:host cell endoplasmic reticulum-Golgi intermediate compartment"/>
    <property type="evidence" value="ECO:0007669"/>
    <property type="project" value="UniProtKB-SubCell"/>
</dbReference>
<dbReference type="GO" id="GO:0044220">
    <property type="term" value="C:host cell perinuclear region of cytoplasm"/>
    <property type="evidence" value="ECO:0007669"/>
    <property type="project" value="UniProtKB-SubCell"/>
</dbReference>
<dbReference type="GO" id="GO:0016020">
    <property type="term" value="C:membrane"/>
    <property type="evidence" value="ECO:0007669"/>
    <property type="project" value="UniProtKB-KW"/>
</dbReference>
<dbReference type="GO" id="GO:0000175">
    <property type="term" value="F:3'-5'-RNA exonuclease activity"/>
    <property type="evidence" value="ECO:0007669"/>
    <property type="project" value="InterPro"/>
</dbReference>
<dbReference type="GO" id="GO:0043139">
    <property type="term" value="F:5'-3' DNA helicase activity"/>
    <property type="evidence" value="ECO:0007669"/>
    <property type="project" value="TreeGrafter"/>
</dbReference>
<dbReference type="GO" id="GO:0005524">
    <property type="term" value="F:ATP binding"/>
    <property type="evidence" value="ECO:0007669"/>
    <property type="project" value="UniProtKB-KW"/>
</dbReference>
<dbReference type="GO" id="GO:0016887">
    <property type="term" value="F:ATP hydrolysis activity"/>
    <property type="evidence" value="ECO:0007669"/>
    <property type="project" value="InterPro"/>
</dbReference>
<dbReference type="GO" id="GO:0004197">
    <property type="term" value="F:cysteine-type endopeptidase activity"/>
    <property type="evidence" value="ECO:0007669"/>
    <property type="project" value="InterPro"/>
</dbReference>
<dbReference type="GO" id="GO:0004519">
    <property type="term" value="F:endonuclease activity"/>
    <property type="evidence" value="ECO:0007669"/>
    <property type="project" value="UniProtKB-KW"/>
</dbReference>
<dbReference type="GO" id="GO:0016829">
    <property type="term" value="F:lyase activity"/>
    <property type="evidence" value="ECO:0007669"/>
    <property type="project" value="UniProtKB-KW"/>
</dbReference>
<dbReference type="GO" id="GO:0004483">
    <property type="term" value="F:mRNA (nucleoside-2'-O-)-methyltransferase activity"/>
    <property type="evidence" value="ECO:0007669"/>
    <property type="project" value="InterPro"/>
</dbReference>
<dbReference type="GO" id="GO:0004482">
    <property type="term" value="F:mRNA 5'-cap (guanine-N7-)-methyltransferase activity"/>
    <property type="evidence" value="ECO:0007669"/>
    <property type="project" value="InterPro"/>
</dbReference>
<dbReference type="GO" id="GO:0008242">
    <property type="term" value="F:omega peptidase activity"/>
    <property type="evidence" value="ECO:0007669"/>
    <property type="project" value="InterPro"/>
</dbReference>
<dbReference type="GO" id="GO:0003723">
    <property type="term" value="F:RNA binding"/>
    <property type="evidence" value="ECO:0007669"/>
    <property type="project" value="UniProtKB-KW"/>
</dbReference>
<dbReference type="GO" id="GO:0003724">
    <property type="term" value="F:RNA helicase activity"/>
    <property type="evidence" value="ECO:0007669"/>
    <property type="project" value="UniProtKB-EC"/>
</dbReference>
<dbReference type="GO" id="GO:0003968">
    <property type="term" value="F:RNA-directed RNA polymerase activity"/>
    <property type="evidence" value="ECO:0007669"/>
    <property type="project" value="UniProtKB-KW"/>
</dbReference>
<dbReference type="GO" id="GO:0008270">
    <property type="term" value="F:zinc ion binding"/>
    <property type="evidence" value="ECO:0007669"/>
    <property type="project" value="UniProtKB-KW"/>
</dbReference>
<dbReference type="GO" id="GO:0006351">
    <property type="term" value="P:DNA-templated transcription"/>
    <property type="evidence" value="ECO:0007669"/>
    <property type="project" value="InterPro"/>
</dbReference>
<dbReference type="GO" id="GO:0006508">
    <property type="term" value="P:proteolysis"/>
    <property type="evidence" value="ECO:0007669"/>
    <property type="project" value="UniProtKB-KW"/>
</dbReference>
<dbReference type="GO" id="GO:0010506">
    <property type="term" value="P:regulation of autophagy"/>
    <property type="evidence" value="ECO:0007669"/>
    <property type="project" value="InterPro"/>
</dbReference>
<dbReference type="GO" id="GO:0039520">
    <property type="term" value="P:symbiont-mediated activation of host autophagy"/>
    <property type="evidence" value="ECO:0007669"/>
    <property type="project" value="UniProtKB-KW"/>
</dbReference>
<dbReference type="GO" id="GO:0019082">
    <property type="term" value="P:viral protein processing"/>
    <property type="evidence" value="ECO:0007669"/>
    <property type="project" value="InterPro"/>
</dbReference>
<dbReference type="GO" id="GO:0039694">
    <property type="term" value="P:viral RNA genome replication"/>
    <property type="evidence" value="ECO:0007669"/>
    <property type="project" value="InterPro"/>
</dbReference>
<dbReference type="GO" id="GO:0075523">
    <property type="term" value="P:viral translational frameshifting"/>
    <property type="evidence" value="ECO:0007669"/>
    <property type="project" value="UniProtKB-KW"/>
</dbReference>
<dbReference type="CDD" id="cd21409">
    <property type="entry name" value="1B_cv_Nsp13-like"/>
    <property type="match status" value="1"/>
</dbReference>
<dbReference type="CDD" id="cd23529">
    <property type="entry name" value="capping_2-OMTase_gammaCoV_Nsp16"/>
    <property type="match status" value="1"/>
</dbReference>
<dbReference type="CDD" id="cd21512">
    <property type="entry name" value="cv_gamma-delta_Nsp2_IBV-like"/>
    <property type="match status" value="1"/>
</dbReference>
<dbReference type="CDD" id="cd21473">
    <property type="entry name" value="cv_Nsp4_TM"/>
    <property type="match status" value="1"/>
</dbReference>
<dbReference type="CDD" id="cd21559">
    <property type="entry name" value="gammaCoV-Nsp6"/>
    <property type="match status" value="1"/>
</dbReference>
<dbReference type="CDD" id="cd21902">
    <property type="entry name" value="gammaCoV_Nsp10"/>
    <property type="match status" value="1"/>
</dbReference>
<dbReference type="CDD" id="cd21720">
    <property type="entry name" value="gammaCoV_Nsp13-helicase"/>
    <property type="match status" value="1"/>
</dbReference>
<dbReference type="CDD" id="cd21658">
    <property type="entry name" value="gammaCoV_Nsp14"/>
    <property type="match status" value="1"/>
</dbReference>
<dbReference type="CDD" id="cd21667">
    <property type="entry name" value="gammaCoV_Nsp5_Mpro"/>
    <property type="match status" value="1"/>
</dbReference>
<dbReference type="CDD" id="cd21828">
    <property type="entry name" value="gammaCoV_Nsp7"/>
    <property type="match status" value="1"/>
</dbReference>
<dbReference type="CDD" id="cd21832">
    <property type="entry name" value="gammaCoV_Nsp8"/>
    <property type="match status" value="1"/>
</dbReference>
<dbReference type="CDD" id="cd21899">
    <property type="entry name" value="gammaCoV_Nsp9"/>
    <property type="match status" value="1"/>
</dbReference>
<dbReference type="CDD" id="cd21733">
    <property type="entry name" value="gammaCoV_PLPro"/>
    <property type="match status" value="1"/>
</dbReference>
<dbReference type="CDD" id="cd21587">
    <property type="entry name" value="gammaCoV_RdRp"/>
    <property type="match status" value="1"/>
</dbReference>
<dbReference type="CDD" id="cd21168">
    <property type="entry name" value="M_gcv_Nsp15-like"/>
    <property type="match status" value="1"/>
</dbReference>
<dbReference type="CDD" id="cd21557">
    <property type="entry name" value="Macro_X_Nsp3-like"/>
    <property type="match status" value="1"/>
</dbReference>
<dbReference type="CDD" id="cd21161">
    <property type="entry name" value="NendoU_cv_Nsp15-like"/>
    <property type="match status" value="1"/>
</dbReference>
<dbReference type="CDD" id="cd22650">
    <property type="entry name" value="NTD_gammaCoV_Nsp15-like"/>
    <property type="match status" value="1"/>
</dbReference>
<dbReference type="CDD" id="cd21689">
    <property type="entry name" value="stalk_CoV_Nsp13-like"/>
    <property type="match status" value="1"/>
</dbReference>
<dbReference type="CDD" id="cd21710">
    <property type="entry name" value="TM_Y_gammaCoV_Nsp3_C"/>
    <property type="match status" value="1"/>
</dbReference>
<dbReference type="CDD" id="cd21401">
    <property type="entry name" value="ZBD_cv_Nsp13-like"/>
    <property type="match status" value="1"/>
</dbReference>
<dbReference type="Gene3D" id="1.10.8.1190">
    <property type="match status" value="1"/>
</dbReference>
<dbReference type="Gene3D" id="2.60.120.1680">
    <property type="match status" value="1"/>
</dbReference>
<dbReference type="Gene3D" id="3.40.50.11580">
    <property type="match status" value="1"/>
</dbReference>
<dbReference type="Gene3D" id="6.10.250.2820">
    <property type="match status" value="1"/>
</dbReference>
<dbReference type="Gene3D" id="1.10.150.420">
    <property type="entry name" value="Coronavirus nonstructural protein 4 C-terminus"/>
    <property type="match status" value="1"/>
</dbReference>
<dbReference type="Gene3D" id="3.40.220.10">
    <property type="entry name" value="Leucine Aminopeptidase, subunit E, domain 1"/>
    <property type="match status" value="1"/>
</dbReference>
<dbReference type="Gene3D" id="1.10.1840.10">
    <property type="entry name" value="main proteinase (3clpro) structure, domain 3"/>
    <property type="match status" value="1"/>
</dbReference>
<dbReference type="Gene3D" id="3.30.160.820">
    <property type="entry name" value="Nsp15 N-terminal domain-like"/>
    <property type="match status" value="1"/>
</dbReference>
<dbReference type="Gene3D" id="1.10.8.370">
    <property type="entry name" value="nsp7 replicase"/>
    <property type="match status" value="1"/>
</dbReference>
<dbReference type="Gene3D" id="3.30.70.3540">
    <property type="entry name" value="Nsp8 replicase, head domain"/>
    <property type="match status" value="1"/>
</dbReference>
<dbReference type="Gene3D" id="3.40.50.300">
    <property type="entry name" value="P-loop containing nucleotide triphosphate hydrolases"/>
    <property type="match status" value="2"/>
</dbReference>
<dbReference type="Gene3D" id="2.40.10.250">
    <property type="entry name" value="Replicase NSP9"/>
    <property type="match status" value="1"/>
</dbReference>
<dbReference type="Gene3D" id="2.40.10.10">
    <property type="entry name" value="Trypsin-like serine proteases"/>
    <property type="match status" value="2"/>
</dbReference>
<dbReference type="Gene3D" id="3.40.50.150">
    <property type="entry name" value="Vaccinia Virus protein VP39"/>
    <property type="match status" value="1"/>
</dbReference>
<dbReference type="InterPro" id="IPR027351">
    <property type="entry name" value="(+)RNA_virus_helicase_core_dom"/>
</dbReference>
<dbReference type="InterPro" id="IPR003593">
    <property type="entry name" value="AAA+_ATPase"/>
</dbReference>
<dbReference type="InterPro" id="IPR046440">
    <property type="entry name" value="AV_NSP11N_COV_NSP15M"/>
</dbReference>
<dbReference type="InterPro" id="IPR050534">
    <property type="entry name" value="Coronavir_polyprotein_1ab"/>
</dbReference>
<dbReference type="InterPro" id="IPR043608">
    <property type="entry name" value="CoV_NSP15_M"/>
</dbReference>
<dbReference type="InterPro" id="IPR043606">
    <property type="entry name" value="CoV_NSP15_N"/>
</dbReference>
<dbReference type="InterPro" id="IPR049894">
    <property type="entry name" value="COV_NSP3_3ECTO"/>
</dbReference>
<dbReference type="InterPro" id="IPR043611">
    <property type="entry name" value="CoV_NSP3_C"/>
</dbReference>
<dbReference type="InterPro" id="IPR047566">
    <property type="entry name" value="CoV_NSP3_Y"/>
</dbReference>
<dbReference type="InterPro" id="IPR032505">
    <property type="entry name" value="CoV_NSP4_C"/>
</dbReference>
<dbReference type="InterPro" id="IPR043612">
    <property type="entry name" value="CoV_NSP4_N"/>
</dbReference>
<dbReference type="InterPro" id="IPR043502">
    <property type="entry name" value="DNA/RNA_pol_sf"/>
</dbReference>
<dbReference type="InterPro" id="IPR037227">
    <property type="entry name" value="EndoU-like"/>
</dbReference>
<dbReference type="InterPro" id="IPR002589">
    <property type="entry name" value="Macro_dom"/>
</dbReference>
<dbReference type="InterPro" id="IPR043472">
    <property type="entry name" value="Macro_dom-like"/>
</dbReference>
<dbReference type="InterPro" id="IPR044371">
    <property type="entry name" value="Macro_X_NSP3-like"/>
</dbReference>
<dbReference type="InterPro" id="IPR046435">
    <property type="entry name" value="N7_MTase_CoV"/>
</dbReference>
<dbReference type="InterPro" id="IPR043609">
    <property type="entry name" value="NendoU_nidovirus"/>
</dbReference>
<dbReference type="InterPro" id="IPR044863">
    <property type="entry name" value="NIRAN"/>
</dbReference>
<dbReference type="InterPro" id="IPR046438">
    <property type="entry name" value="NIV_2_O_MTASE"/>
</dbReference>
<dbReference type="InterPro" id="IPR046436">
    <property type="entry name" value="NIV_EXON"/>
</dbReference>
<dbReference type="InterPro" id="IPR036333">
    <property type="entry name" value="NSP10_sf_CoV"/>
</dbReference>
<dbReference type="InterPro" id="IPR047570">
    <property type="entry name" value="NSP12_IF_CoV"/>
</dbReference>
<dbReference type="InterPro" id="IPR044343">
    <property type="entry name" value="NSP13_1B_dom_CoV"/>
</dbReference>
<dbReference type="InterPro" id="IPR048673">
    <property type="entry name" value="NSP13_stalk_CoV"/>
</dbReference>
<dbReference type="InterPro" id="IPR048672">
    <property type="entry name" value="NSP13_ZBD_CoV"/>
</dbReference>
<dbReference type="InterPro" id="IPR027352">
    <property type="entry name" value="NSP13_ZBD_CoV-like"/>
</dbReference>
<dbReference type="InterPro" id="IPR009466">
    <property type="entry name" value="NSP14_CoV"/>
</dbReference>
<dbReference type="InterPro" id="IPR044316">
    <property type="entry name" value="NSP14_gammaCoV"/>
</dbReference>
<dbReference type="InterPro" id="IPR044328">
    <property type="entry name" value="NSP15_gammaCoV_N"/>
</dbReference>
<dbReference type="InterPro" id="IPR044325">
    <property type="entry name" value="NSP15_M_gammaCoV"/>
</dbReference>
<dbReference type="InterPro" id="IPR043174">
    <property type="entry name" value="NSP15_middle_sf"/>
</dbReference>
<dbReference type="InterPro" id="IPR042515">
    <property type="entry name" value="NSP15_N_CoV"/>
</dbReference>
<dbReference type="InterPro" id="IPR044401">
    <property type="entry name" value="NSP15_NendoU_CoV"/>
</dbReference>
<dbReference type="InterPro" id="IPR009461">
    <property type="entry name" value="NSP16_CoV-like"/>
</dbReference>
<dbReference type="InterPro" id="IPR040795">
    <property type="entry name" value="NSP2_gammaCoV"/>
</dbReference>
<dbReference type="InterPro" id="IPR044383">
    <property type="entry name" value="NSP2_IBV-like"/>
</dbReference>
<dbReference type="InterPro" id="IPR044357">
    <property type="entry name" value="NSP3_Ubl1_dom_CoV"/>
</dbReference>
<dbReference type="InterPro" id="IPR044353">
    <property type="entry name" value="Nsp3_Ubl2_dom_CoV"/>
</dbReference>
<dbReference type="InterPro" id="IPR038123">
    <property type="entry name" value="NSP4_C_sf_CoV"/>
</dbReference>
<dbReference type="InterPro" id="IPR044308">
    <property type="entry name" value="NSP5_Mpro_GammaCoV"/>
</dbReference>
<dbReference type="InterPro" id="IPR043610">
    <property type="entry name" value="NSP6_CoV"/>
</dbReference>
<dbReference type="InterPro" id="IPR044368">
    <property type="entry name" value="NSP6_gammaCoV"/>
</dbReference>
<dbReference type="InterPro" id="IPR014828">
    <property type="entry name" value="NSP7_CoV"/>
</dbReference>
<dbReference type="InterPro" id="IPR037204">
    <property type="entry name" value="NSP7_sf_CoV"/>
</dbReference>
<dbReference type="InterPro" id="IPR014829">
    <property type="entry name" value="NSP8_CoV"/>
</dbReference>
<dbReference type="InterPro" id="IPR037230">
    <property type="entry name" value="NSP8_sf_CoV"/>
</dbReference>
<dbReference type="InterPro" id="IPR014822">
    <property type="entry name" value="NSP9_CoV"/>
</dbReference>
<dbReference type="InterPro" id="IPR036499">
    <property type="entry name" value="NSP9_sf_CoV"/>
</dbReference>
<dbReference type="InterPro" id="IPR027417">
    <property type="entry name" value="P-loop_NTPase"/>
</dbReference>
<dbReference type="InterPro" id="IPR013016">
    <property type="entry name" value="Peptidase_C16_CoV"/>
</dbReference>
<dbReference type="InterPro" id="IPR008740">
    <property type="entry name" value="Peptidase_C30_CoV"/>
</dbReference>
<dbReference type="InterPro" id="IPR043477">
    <property type="entry name" value="Peptidase_C30_dom3_CoV"/>
</dbReference>
<dbReference type="InterPro" id="IPR009003">
    <property type="entry name" value="Peptidase_S1_PA"/>
</dbReference>
<dbReference type="InterPro" id="IPR043504">
    <property type="entry name" value="Peptidase_S1_PA_chymotrypsin"/>
</dbReference>
<dbReference type="InterPro" id="IPR043503">
    <property type="entry name" value="PLpro_palm_finger_dom_CoV"/>
</dbReference>
<dbReference type="InterPro" id="IPR043178">
    <property type="entry name" value="PLpro_thumb_sf_CoV"/>
</dbReference>
<dbReference type="InterPro" id="IPR046441">
    <property type="entry name" value="RdRp_CoV"/>
</dbReference>
<dbReference type="InterPro" id="IPR044358">
    <property type="entry name" value="RdRp_gammaCoV"/>
</dbReference>
<dbReference type="InterPro" id="IPR009469">
    <property type="entry name" value="RdRp_N_CoV"/>
</dbReference>
<dbReference type="InterPro" id="IPR001205">
    <property type="entry name" value="RNA-dir_pol_C"/>
</dbReference>
<dbReference type="InterPro" id="IPR007094">
    <property type="entry name" value="RNA-dir_pol_PSvirus"/>
</dbReference>
<dbReference type="InterPro" id="IPR018995">
    <property type="entry name" value="RNA_synth_NSP10_CoV"/>
</dbReference>
<dbReference type="InterPro" id="IPR029063">
    <property type="entry name" value="SAM-dependent_MTases_sf"/>
</dbReference>
<dbReference type="PANTHER" id="PTHR43788">
    <property type="entry name" value="DNA2/NAM7 HELICASE FAMILY MEMBER"/>
    <property type="match status" value="1"/>
</dbReference>
<dbReference type="PANTHER" id="PTHR43788:SF16">
    <property type="entry name" value="HELICASE WITH ZINC FINGER 2"/>
    <property type="match status" value="1"/>
</dbReference>
<dbReference type="Pfam" id="PF06471">
    <property type="entry name" value="CoV_ExoN"/>
    <property type="match status" value="1"/>
</dbReference>
<dbReference type="Pfam" id="PF06460">
    <property type="entry name" value="CoV_Methyltr_2"/>
    <property type="match status" value="1"/>
</dbReference>
<dbReference type="Pfam" id="PF09401">
    <property type="entry name" value="CoV_NSP10"/>
    <property type="match status" value="1"/>
</dbReference>
<dbReference type="Pfam" id="PF20631">
    <property type="entry name" value="CoV_NSP13_1B"/>
    <property type="match status" value="1"/>
</dbReference>
<dbReference type="Pfam" id="PF20633">
    <property type="entry name" value="CoV_NSP13_stalk"/>
    <property type="match status" value="1"/>
</dbReference>
<dbReference type="Pfam" id="PF20632">
    <property type="entry name" value="CoV_NSP13_ZBD"/>
    <property type="match status" value="1"/>
</dbReference>
<dbReference type="Pfam" id="PF19215">
    <property type="entry name" value="CoV_NSP15_C"/>
    <property type="match status" value="1"/>
</dbReference>
<dbReference type="Pfam" id="PF19216">
    <property type="entry name" value="CoV_NSP15_M"/>
    <property type="match status" value="1"/>
</dbReference>
<dbReference type="Pfam" id="PF19219">
    <property type="entry name" value="CoV_NSP15_N"/>
    <property type="match status" value="1"/>
</dbReference>
<dbReference type="Pfam" id="PF19218">
    <property type="entry name" value="CoV_NSP3_C"/>
    <property type="match status" value="1"/>
</dbReference>
<dbReference type="Pfam" id="PF16348">
    <property type="entry name" value="CoV_NSP4_C"/>
    <property type="match status" value="1"/>
</dbReference>
<dbReference type="Pfam" id="PF19217">
    <property type="entry name" value="CoV_NSP4_N"/>
    <property type="match status" value="1"/>
</dbReference>
<dbReference type="Pfam" id="PF19213">
    <property type="entry name" value="CoV_NSP6"/>
    <property type="match status" value="1"/>
</dbReference>
<dbReference type="Pfam" id="PF08716">
    <property type="entry name" value="CoV_NSP7"/>
    <property type="match status" value="1"/>
</dbReference>
<dbReference type="Pfam" id="PF08717">
    <property type="entry name" value="CoV_NSP8"/>
    <property type="match status" value="1"/>
</dbReference>
<dbReference type="Pfam" id="PF08710">
    <property type="entry name" value="CoV_NSP9"/>
    <property type="match status" value="1"/>
</dbReference>
<dbReference type="Pfam" id="PF08715">
    <property type="entry name" value="CoV_peptidase"/>
    <property type="match status" value="1"/>
</dbReference>
<dbReference type="Pfam" id="PF06478">
    <property type="entry name" value="CoV_RPol_N"/>
    <property type="match status" value="1"/>
</dbReference>
<dbReference type="Pfam" id="PF01661">
    <property type="entry name" value="Macro"/>
    <property type="match status" value="1"/>
</dbReference>
<dbReference type="Pfam" id="PF17896">
    <property type="entry name" value="NSP2_gammaCoV"/>
    <property type="match status" value="1"/>
</dbReference>
<dbReference type="Pfam" id="PF05409">
    <property type="entry name" value="Peptidase_C30"/>
    <property type="match status" value="1"/>
</dbReference>
<dbReference type="Pfam" id="PF00680">
    <property type="entry name" value="RdRP_1"/>
    <property type="match status" value="1"/>
</dbReference>
<dbReference type="Pfam" id="PF01443">
    <property type="entry name" value="Viral_helicase1"/>
    <property type="match status" value="1"/>
</dbReference>
<dbReference type="SMART" id="SM00506">
    <property type="entry name" value="A1pp"/>
    <property type="match status" value="1"/>
</dbReference>
<dbReference type="SMART" id="SM00382">
    <property type="entry name" value="AAA"/>
    <property type="match status" value="1"/>
</dbReference>
<dbReference type="SUPFAM" id="SSF144246">
    <property type="entry name" value="Coronavirus NSP10-like"/>
    <property type="match status" value="1"/>
</dbReference>
<dbReference type="SUPFAM" id="SSF140367">
    <property type="entry name" value="Coronavirus NSP7-like"/>
    <property type="match status" value="1"/>
</dbReference>
<dbReference type="SUPFAM" id="SSF143076">
    <property type="entry name" value="Coronavirus NSP8-like"/>
    <property type="match status" value="1"/>
</dbReference>
<dbReference type="SUPFAM" id="SSF56672">
    <property type="entry name" value="DNA/RNA polymerases"/>
    <property type="match status" value="1"/>
</dbReference>
<dbReference type="SUPFAM" id="SSF142877">
    <property type="entry name" value="EndoU-like"/>
    <property type="match status" value="1"/>
</dbReference>
<dbReference type="SUPFAM" id="SSF52949">
    <property type="entry name" value="Macro domain-like"/>
    <property type="match status" value="1"/>
</dbReference>
<dbReference type="SUPFAM" id="SSF52540">
    <property type="entry name" value="P-loop containing nucleoside triphosphate hydrolases"/>
    <property type="match status" value="1"/>
</dbReference>
<dbReference type="SUPFAM" id="SSF101816">
    <property type="entry name" value="Replicase NSP9"/>
    <property type="match status" value="1"/>
</dbReference>
<dbReference type="SUPFAM" id="SSF53335">
    <property type="entry name" value="S-adenosyl-L-methionine-dependent methyltransferases"/>
    <property type="match status" value="1"/>
</dbReference>
<dbReference type="SUPFAM" id="SSF50494">
    <property type="entry name" value="Trypsin-like serine proteases"/>
    <property type="match status" value="1"/>
</dbReference>
<dbReference type="PROSITE" id="PS51961">
    <property type="entry name" value="AV_NSP11N_COV_NSP15M"/>
    <property type="match status" value="1"/>
</dbReference>
<dbReference type="PROSITE" id="PS51993">
    <property type="entry name" value="COV_3ECTO"/>
    <property type="match status" value="1"/>
</dbReference>
<dbReference type="PROSITE" id="PS51952">
    <property type="entry name" value="COV_EXON_MTASE_COACT"/>
    <property type="match status" value="1"/>
</dbReference>
<dbReference type="PROSITE" id="PS51954">
    <property type="entry name" value="COV_N7_MTASE"/>
    <property type="match status" value="1"/>
</dbReference>
<dbReference type="PROSITE" id="PS52000">
    <property type="entry name" value="COV_NSP12_IF"/>
    <property type="match status" value="1"/>
</dbReference>
<dbReference type="PROSITE" id="PS51948">
    <property type="entry name" value="COV_NSP12_RDRP"/>
    <property type="match status" value="1"/>
</dbReference>
<dbReference type="PROSITE" id="PS51960">
    <property type="entry name" value="COV_NSP15_NTD"/>
    <property type="match status" value="1"/>
</dbReference>
<dbReference type="PROSITE" id="PS51992">
    <property type="entry name" value="COV_NSP3_Y"/>
    <property type="match status" value="1"/>
</dbReference>
<dbReference type="PROSITE" id="PS51943">
    <property type="entry name" value="COV_NSP3A_UBL"/>
    <property type="match status" value="1"/>
</dbReference>
<dbReference type="PROSITE" id="PS51944">
    <property type="entry name" value="COV_NSP3D_UBL"/>
    <property type="match status" value="1"/>
</dbReference>
<dbReference type="PROSITE" id="PS51946">
    <property type="entry name" value="COV_NSP4C"/>
    <property type="match status" value="1"/>
</dbReference>
<dbReference type="PROSITE" id="PS51949">
    <property type="entry name" value="COV_NSP7"/>
    <property type="match status" value="1"/>
</dbReference>
<dbReference type="PROSITE" id="PS51950">
    <property type="entry name" value="COV_NSP8"/>
    <property type="match status" value="1"/>
</dbReference>
<dbReference type="PROSITE" id="PS51951">
    <property type="entry name" value="COV_NSP9_SSRNA_BD"/>
    <property type="match status" value="1"/>
</dbReference>
<dbReference type="PROSITE" id="PS51653">
    <property type="entry name" value="CV_ZBD"/>
    <property type="match status" value="1"/>
</dbReference>
<dbReference type="PROSITE" id="PS51442">
    <property type="entry name" value="M_PRO"/>
    <property type="match status" value="1"/>
</dbReference>
<dbReference type="PROSITE" id="PS51154">
    <property type="entry name" value="MACRO"/>
    <property type="match status" value="1"/>
</dbReference>
<dbReference type="PROSITE" id="PS51958">
    <property type="entry name" value="NENDOU"/>
    <property type="match status" value="1"/>
</dbReference>
<dbReference type="PROSITE" id="PS51947">
    <property type="entry name" value="NIRAN"/>
    <property type="match status" value="1"/>
</dbReference>
<dbReference type="PROSITE" id="PS51955">
    <property type="entry name" value="NIV_2_O_MTASE"/>
    <property type="match status" value="1"/>
</dbReference>
<dbReference type="PROSITE" id="PS51953">
    <property type="entry name" value="NIV_EXON"/>
    <property type="match status" value="1"/>
</dbReference>
<dbReference type="PROSITE" id="PS51124">
    <property type="entry name" value="PEPTIDASE_C16"/>
    <property type="match status" value="1"/>
</dbReference>
<dbReference type="PROSITE" id="PS51657">
    <property type="entry name" value="PSRV_HELICASE"/>
    <property type="match status" value="1"/>
</dbReference>
<dbReference type="PROSITE" id="PS50507">
    <property type="entry name" value="RDRP_SSRNA_POS"/>
    <property type="match status" value="1"/>
</dbReference>
<feature type="chain" id="PRO_0000037418" description="Non-structural protein 2">
    <location>
        <begin position="1"/>
        <end position="673"/>
    </location>
</feature>
<feature type="chain" id="PRO_0000037419" description="Papain-like protease">
    <location>
        <begin position="674"/>
        <end position="2265"/>
    </location>
</feature>
<feature type="chain" id="PRO_0000037420" description="Non-structural protein 4">
    <location>
        <begin position="2266"/>
        <end position="2779"/>
    </location>
</feature>
<feature type="chain" id="PRO_0000037421" description="3C-like proteinase">
    <location>
        <begin position="2780"/>
        <end position="3086"/>
    </location>
</feature>
<feature type="chain" id="PRO_0000037422" description="Non-structural protein 6">
    <location>
        <begin position="3087"/>
        <end position="3379"/>
    </location>
</feature>
<feature type="chain" id="PRO_0000037423" description="Non-structural protein 7">
    <location>
        <begin position="3380"/>
        <end position="3462"/>
    </location>
</feature>
<feature type="chain" id="PRO_0000037424" description="Non-structural protein 8">
    <location>
        <begin position="3463"/>
        <end position="3672"/>
    </location>
</feature>
<feature type="chain" id="PRO_0000037425" description="Viral protein genome-linked nsp9">
    <location>
        <begin position="3673"/>
        <end position="3783"/>
    </location>
</feature>
<feature type="chain" id="PRO_0000037426" description="Non-structural protein 10">
    <location>
        <begin position="3784"/>
        <end position="3928"/>
    </location>
</feature>
<feature type="chain" id="PRO_0000037427" description="RNA-directed RNA polymerase nsp12">
    <location>
        <begin position="3929"/>
        <end position="4868"/>
    </location>
</feature>
<feature type="chain" id="PRO_0000037428" description="Helicase">
    <location>
        <begin position="4869"/>
        <end position="5468"/>
    </location>
</feature>
<feature type="chain" id="PRO_0000037429" description="Proofreading exoribonuclease">
    <location>
        <begin position="5469"/>
        <end position="5989"/>
    </location>
</feature>
<feature type="chain" id="PRO_0000037430" description="Uridylate-specific endoribonuclease">
    <location>
        <begin position="5990"/>
        <end position="6327"/>
    </location>
</feature>
<feature type="chain" id="PRO_0000037431" description="2'-O-methyl transferase">
    <location>
        <begin position="6328"/>
        <end position="6629"/>
    </location>
</feature>
<feature type="topological domain" description="Cytoplasmic" evidence="2">
    <location>
        <begin position="1"/>
        <end position="1750"/>
    </location>
</feature>
<feature type="transmembrane region" description="Helical" evidence="6">
    <location>
        <begin position="1751"/>
        <end position="1771"/>
    </location>
</feature>
<feature type="topological domain" description="Lumenal" evidence="2">
    <location>
        <begin position="1772"/>
        <end position="1843"/>
    </location>
</feature>
<feature type="transmembrane region" description="Helical" evidence="6">
    <location>
        <begin position="1844"/>
        <end position="1864"/>
    </location>
</feature>
<feature type="topological domain" description="Cytoplasmic" evidence="2">
    <location>
        <begin position="1865"/>
        <end position="2280"/>
    </location>
</feature>
<feature type="transmembrane region" description="Helical" evidence="6">
    <location>
        <begin position="2281"/>
        <end position="2301"/>
    </location>
</feature>
<feature type="topological domain" description="Lumenal" evidence="2">
    <location>
        <begin position="2302"/>
        <end position="2559"/>
    </location>
</feature>
<feature type="transmembrane region" description="Helical" evidence="6">
    <location>
        <begin position="2560"/>
        <end position="2580"/>
    </location>
</feature>
<feature type="topological domain" description="Cytoplasmic" evidence="2">
    <location>
        <begin position="2581"/>
        <end position="2611"/>
    </location>
</feature>
<feature type="transmembrane region" description="Helical" evidence="6">
    <location>
        <begin position="2612"/>
        <end position="2632"/>
    </location>
</feature>
<feature type="topological domain" description="Lumenal" evidence="2">
    <location>
        <begin position="2633"/>
        <end position="2643"/>
    </location>
</feature>
<feature type="transmembrane region" description="Helical" evidence="6">
    <location>
        <begin position="2644"/>
        <end position="2664"/>
    </location>
</feature>
<feature type="topological domain" description="Cytoplasmic" evidence="2">
    <location>
        <begin position="2665"/>
        <end position="3096"/>
    </location>
</feature>
<feature type="transmembrane region" description="Helical" evidence="6">
    <location>
        <begin position="3097"/>
        <end position="3117"/>
    </location>
</feature>
<feature type="topological domain" description="Lumenal" evidence="2">
    <location>
        <begin position="3118"/>
        <end position="3121"/>
    </location>
</feature>
<feature type="transmembrane region" description="Helical" evidence="6">
    <location>
        <begin position="3122"/>
        <end position="3142"/>
    </location>
</feature>
<feature type="topological domain" description="Cytoplasmic" evidence="2">
    <location>
        <begin position="3143"/>
        <end position="3151"/>
    </location>
</feature>
<feature type="transmembrane region" description="Helical" evidence="6">
    <location>
        <begin position="3152"/>
        <end position="3172"/>
    </location>
</feature>
<feature type="topological domain" description="Lumenal" evidence="2">
    <location>
        <begin position="3173"/>
        <end position="3188"/>
    </location>
</feature>
<feature type="transmembrane region" description="Helical" evidence="6">
    <location>
        <begin position="3189"/>
        <end position="3209"/>
    </location>
</feature>
<feature type="topological domain" description="Cytoplasmic" evidence="2">
    <location>
        <begin position="3210"/>
        <end position="3257"/>
    </location>
</feature>
<feature type="transmembrane region" description="Helical" evidence="6">
    <location>
        <begin position="3258"/>
        <end position="3278"/>
    </location>
</feature>
<feature type="topological domain" description="Lumenal" evidence="2">
    <location>
        <begin position="3279"/>
        <end position="3296"/>
    </location>
</feature>
<feature type="transmembrane region" description="Helical" evidence="6">
    <location>
        <begin position="3297"/>
        <end position="3317"/>
    </location>
</feature>
<feature type="topological domain" description="Cytoplasmic" evidence="2">
    <location>
        <begin position="3318"/>
        <end position="6629"/>
    </location>
</feature>
<feature type="domain" description="Ubiquitin-like 1" evidence="7">
    <location>
        <begin position="675"/>
        <end position="780"/>
    </location>
</feature>
<feature type="domain" description="Macro" evidence="9">
    <location>
        <begin position="1003"/>
        <end position="1179"/>
    </location>
</feature>
<feature type="domain" description="Ubiquitin-like 2" evidence="7">
    <location>
        <begin position="1175"/>
        <end position="1227"/>
    </location>
</feature>
<feature type="domain" description="Peptidase C16" evidence="8">
    <location>
        <begin position="1236"/>
        <end position="1497"/>
    </location>
</feature>
<feature type="domain" description="3Ecto" evidence="27">
    <location>
        <begin position="1769"/>
        <end position="1833"/>
    </location>
</feature>
<feature type="domain" description="CoV Nsp3 Y" evidence="26">
    <location>
        <begin position="1911"/>
        <end position="2263"/>
    </location>
</feature>
<feature type="domain" description="Nsp4C" evidence="13">
    <location>
        <begin position="2684"/>
        <end position="2779"/>
    </location>
</feature>
<feature type="domain" description="Peptidase C30" evidence="11">
    <location>
        <begin position="2780"/>
        <end position="3086"/>
    </location>
</feature>
<feature type="domain" description="RdRp Nsp7 cofactor" evidence="16">
    <location>
        <begin position="3380"/>
        <end position="3462"/>
    </location>
</feature>
<feature type="domain" description="RdRp Nsp8 cofactor" evidence="17">
    <location>
        <begin position="3463"/>
        <end position="3672"/>
    </location>
</feature>
<feature type="domain" description="Nsp9 ssRNA-binding" evidence="18">
    <location>
        <begin position="3673"/>
        <end position="3783"/>
    </location>
</feature>
<feature type="domain" description="ExoN/MTase coactivator" evidence="19">
    <location>
        <begin position="3785"/>
        <end position="3926"/>
    </location>
</feature>
<feature type="domain" description="NiRAN" evidence="14">
    <location>
        <begin position="3940"/>
        <end position="4198"/>
    </location>
</feature>
<feature type="domain" description="Nsp12 Interface" evidence="28">
    <location>
        <begin position="4203"/>
        <end position="4301"/>
    </location>
</feature>
<feature type="domain" description="Nsp12 RNA-dependent RNA polymerase" evidence="15">
    <location>
        <begin position="4302"/>
        <end position="4868"/>
    </location>
</feature>
<feature type="domain" description="RdRp catalytic" evidence="10">
    <location>
        <begin position="4548"/>
        <end position="4710"/>
    </location>
</feature>
<feature type="domain" description="CV ZBD" evidence="12">
    <location>
        <begin position="4869"/>
        <end position="4981"/>
    </location>
</feature>
<feature type="domain" description="(+)RNA virus helicase ATP-binding">
    <location>
        <begin position="5125"/>
        <end position="5305"/>
    </location>
</feature>
<feature type="domain" description="(+)RNA virus helicase C-terminal">
    <location>
        <begin position="5306"/>
        <end position="5477"/>
    </location>
</feature>
<feature type="domain" description="ExoN" evidence="20">
    <location>
        <begin position="5539"/>
        <end position="5753"/>
    </location>
</feature>
<feature type="domain" description="N7-MTase" evidence="21">
    <location>
        <begin position="5762"/>
        <end position="5989"/>
    </location>
</feature>
<feature type="domain" description="Nsp15 N-terminal oligomerization" evidence="24">
    <location>
        <begin position="5990"/>
        <end position="6050"/>
    </location>
</feature>
<feature type="domain" description="AV-Nsp11N/CoV-Nsp15M" evidence="25">
    <location>
        <begin position="6051"/>
        <end position="6166"/>
    </location>
</feature>
<feature type="domain" description="NendoU" evidence="23">
    <location>
        <begin position="6183"/>
        <end position="6324"/>
    </location>
</feature>
<feature type="domain" description="Nidovirus-type SAM-dependent 2'-O-MTase" evidence="22">
    <location>
        <begin position="6327"/>
        <end position="6626"/>
    </location>
</feature>
<feature type="zinc finger region" description="C4-type; degenerate" evidence="8">
    <location>
        <begin position="1353"/>
        <end position="1390"/>
    </location>
</feature>
<feature type="zinc finger region" evidence="1">
    <location>
        <begin position="3858"/>
        <end position="3878"/>
    </location>
</feature>
<feature type="zinc finger region" evidence="1">
    <location>
        <begin position="3904"/>
        <end position="3917"/>
    </location>
</feature>
<feature type="region of interest" description="Disordered" evidence="29">
    <location>
        <begin position="783"/>
        <end position="802"/>
    </location>
</feature>
<feature type="region of interest" description="HD1" evidence="2">
    <location>
        <begin position="1751"/>
        <end position="1864"/>
    </location>
</feature>
<feature type="region of interest" description="Y1" evidence="26">
    <location>
        <begin position="1911"/>
        <end position="2001"/>
    </location>
</feature>
<feature type="region of interest" description="ZF1" evidence="26">
    <location>
        <begin position="1915"/>
        <end position="1928"/>
    </location>
</feature>
<feature type="region of interest" description="ZF2" evidence="26">
    <location>
        <begin position="1961"/>
        <end position="1971"/>
    </location>
</feature>
<feature type="region of interest" description="CoV-Y" evidence="26">
    <location>
        <begin position="2002"/>
        <end position="2263"/>
    </location>
</feature>
<feature type="region of interest" description="Y2" evidence="26">
    <location>
        <begin position="2002"/>
        <end position="2104"/>
    </location>
</feature>
<feature type="region of interest" description="Y3" evidence="26">
    <location>
        <begin position="2105"/>
        <end position="2163"/>
    </location>
</feature>
<feature type="region of interest" description="Y4" evidence="26">
    <location>
        <begin position="2164"/>
        <end position="2263"/>
    </location>
</feature>
<feature type="region of interest" description="HD2" evidence="2">
    <location>
        <begin position="2281"/>
        <end position="2664"/>
    </location>
</feature>
<feature type="region of interest" description="HD3" evidence="2">
    <location>
        <begin position="3097"/>
        <end position="3317"/>
    </location>
</feature>
<feature type="region of interest" description="RdRp Fingers N-ter" evidence="15">
    <location>
        <begin position="4304"/>
        <end position="4517"/>
    </location>
</feature>
<feature type="region of interest" description="RdRp Palm N-ter" evidence="15">
    <location>
        <begin position="4518"/>
        <end position="4556"/>
    </location>
</feature>
<feature type="region of interest" description="RdRp Fingers C-ter" evidence="15">
    <location>
        <begin position="4557"/>
        <end position="4615"/>
    </location>
</feature>
<feature type="region of interest" description="RdRp Palm C-ter" evidence="15">
    <location>
        <begin position="4616"/>
        <end position="4751"/>
    </location>
</feature>
<feature type="region of interest" description="RdRp Thumb" evidence="15">
    <location>
        <begin position="4752"/>
        <end position="4868"/>
    </location>
</feature>
<feature type="region of interest" description="GpppA-binding" evidence="21">
    <location>
        <begin position="5877"/>
        <end position="5891"/>
    </location>
</feature>
<feature type="active site" description="For PL-PRO activity" evidence="8">
    <location>
        <position position="1274"/>
    </location>
</feature>
<feature type="active site" description="For PL-PRO activity" evidence="8">
    <location>
        <position position="1437"/>
    </location>
</feature>
<feature type="active site" description="For PL-PRO activity" evidence="8">
    <location>
        <position position="1448"/>
    </location>
</feature>
<feature type="active site" description="For 3CL-PRO activity" evidence="11">
    <location>
        <position position="2820"/>
    </location>
</feature>
<feature type="active site" description="For 3CL-PRO activity" evidence="11">
    <location>
        <position position="2922"/>
    </location>
</feature>
<feature type="active site" evidence="15">
    <location>
        <position position="4695"/>
    </location>
</feature>
<feature type="active site" evidence="15">
    <location>
        <position position="4696"/>
    </location>
</feature>
<feature type="active site" evidence="15">
    <location>
        <position position="4697"/>
    </location>
</feature>
<feature type="active site" evidence="20">
    <location>
        <position position="5557"/>
    </location>
</feature>
<feature type="active site" evidence="20">
    <location>
        <position position="5559"/>
    </location>
</feature>
<feature type="active site" evidence="20">
    <location>
        <position position="5658"/>
    </location>
</feature>
<feature type="active site" evidence="20">
    <location>
        <position position="5734"/>
    </location>
</feature>
<feature type="active site" evidence="20">
    <location>
        <position position="5739"/>
    </location>
</feature>
<feature type="active site" evidence="23">
    <location>
        <position position="6212"/>
    </location>
</feature>
<feature type="active site" evidence="23">
    <location>
        <position position="6227"/>
    </location>
</feature>
<feature type="active site" evidence="23">
    <location>
        <position position="6267"/>
    </location>
</feature>
<feature type="active site" evidence="22">
    <location>
        <position position="6371"/>
    </location>
</feature>
<feature type="active site" evidence="22">
    <location>
        <position position="6455"/>
    </location>
</feature>
<feature type="active site" evidence="22">
    <location>
        <position position="6499"/>
    </location>
</feature>
<feature type="active site" evidence="22">
    <location>
        <position position="6532"/>
    </location>
</feature>
<feature type="binding site" evidence="26">
    <location>
        <position position="1915"/>
    </location>
    <ligand>
        <name>Zn(2+)</name>
        <dbReference type="ChEBI" id="CHEBI:29105"/>
        <label>1</label>
    </ligand>
</feature>
<feature type="binding site" evidence="26">
    <location>
        <position position="1920"/>
    </location>
    <ligand>
        <name>Zn(2+)</name>
        <dbReference type="ChEBI" id="CHEBI:29105"/>
        <label>1</label>
    </ligand>
</feature>
<feature type="binding site" evidence="26">
    <location>
        <position position="1925"/>
    </location>
    <ligand>
        <name>Zn(2+)</name>
        <dbReference type="ChEBI" id="CHEBI:29105"/>
        <label>1</label>
    </ligand>
</feature>
<feature type="binding site" evidence="26">
    <location>
        <position position="1928"/>
    </location>
    <ligand>
        <name>Zn(2+)</name>
        <dbReference type="ChEBI" id="CHEBI:29105"/>
        <label>1</label>
    </ligand>
</feature>
<feature type="binding site" evidence="26">
    <location>
        <position position="1961"/>
    </location>
    <ligand>
        <name>Zn(2+)</name>
        <dbReference type="ChEBI" id="CHEBI:29105"/>
        <label>2</label>
    </ligand>
</feature>
<feature type="binding site" evidence="26">
    <location>
        <position position="1964"/>
    </location>
    <ligand>
        <name>Zn(2+)</name>
        <dbReference type="ChEBI" id="CHEBI:29105"/>
        <label>2</label>
    </ligand>
</feature>
<feature type="binding site" evidence="26">
    <location>
        <position position="1968"/>
    </location>
    <ligand>
        <name>Zn(2+)</name>
        <dbReference type="ChEBI" id="CHEBI:29105"/>
        <label>2</label>
    </ligand>
</feature>
<feature type="binding site" evidence="26">
    <location>
        <position position="1971"/>
    </location>
    <ligand>
        <name>Zn(2+)</name>
        <dbReference type="ChEBI" id="CHEBI:29105"/>
        <label>2</label>
    </ligand>
</feature>
<feature type="binding site" evidence="19">
    <location>
        <position position="3858"/>
    </location>
    <ligand>
        <name>Zn(2+)</name>
        <dbReference type="ChEBI" id="CHEBI:29105"/>
        <label>1</label>
    </ligand>
</feature>
<feature type="binding site" evidence="19">
    <location>
        <position position="3861"/>
    </location>
    <ligand>
        <name>Zn(2+)</name>
        <dbReference type="ChEBI" id="CHEBI:29105"/>
        <label>1</label>
    </ligand>
</feature>
<feature type="binding site" evidence="19">
    <location>
        <position position="3867"/>
    </location>
    <ligand>
        <name>Zn(2+)</name>
        <dbReference type="ChEBI" id="CHEBI:29105"/>
        <label>1</label>
    </ligand>
</feature>
<feature type="binding site" evidence="19">
    <location>
        <position position="3878"/>
    </location>
    <ligand>
        <name>Zn(2+)</name>
        <dbReference type="ChEBI" id="CHEBI:29105"/>
        <label>1</label>
    </ligand>
</feature>
<feature type="binding site" evidence="19">
    <location>
        <position position="3904"/>
    </location>
    <ligand>
        <name>Zn(2+)</name>
        <dbReference type="ChEBI" id="CHEBI:29105"/>
        <label>2</label>
    </ligand>
</feature>
<feature type="binding site" evidence="19">
    <location>
        <position position="3907"/>
    </location>
    <ligand>
        <name>Zn(2+)</name>
        <dbReference type="ChEBI" id="CHEBI:29105"/>
        <label>2</label>
    </ligand>
</feature>
<feature type="binding site" evidence="19">
    <location>
        <position position="3915"/>
    </location>
    <ligand>
        <name>Zn(2+)</name>
        <dbReference type="ChEBI" id="CHEBI:29105"/>
        <label>2</label>
    </ligand>
</feature>
<feature type="binding site" evidence="19">
    <location>
        <position position="3917"/>
    </location>
    <ligand>
        <name>Zn(2+)</name>
        <dbReference type="ChEBI" id="CHEBI:29105"/>
        <label>2</label>
    </ligand>
</feature>
<feature type="binding site" evidence="28">
    <location>
        <position position="4232"/>
    </location>
    <ligand>
        <name>Zn(2+)</name>
        <dbReference type="ChEBI" id="CHEBI:29105"/>
        <label>3</label>
    </ligand>
</feature>
<feature type="binding site" evidence="28">
    <location>
        <position position="4238"/>
    </location>
    <ligand>
        <name>Zn(2+)</name>
        <dbReference type="ChEBI" id="CHEBI:29105"/>
        <label>3</label>
    </ligand>
</feature>
<feature type="binding site" evidence="28">
    <location>
        <position position="4243"/>
    </location>
    <ligand>
        <name>Zn(2+)</name>
        <dbReference type="ChEBI" id="CHEBI:29105"/>
        <label>3</label>
    </ligand>
</feature>
<feature type="binding site" evidence="28">
    <location>
        <position position="4247"/>
    </location>
    <ligand>
        <name>Zn(2+)</name>
        <dbReference type="ChEBI" id="CHEBI:29105"/>
        <label>3</label>
    </ligand>
</feature>
<feature type="binding site" evidence="15">
    <location>
        <position position="4424"/>
    </location>
    <ligand>
        <name>Zn(2+)</name>
        <dbReference type="ChEBI" id="CHEBI:29105"/>
        <label>4</label>
    </ligand>
</feature>
<feature type="binding site" evidence="15">
    <location>
        <position position="4578"/>
    </location>
    <ligand>
        <name>Zn(2+)</name>
        <dbReference type="ChEBI" id="CHEBI:29105"/>
        <label>4</label>
    </ligand>
</feature>
<feature type="binding site" evidence="15">
    <location>
        <position position="4581"/>
    </location>
    <ligand>
        <name>Zn(2+)</name>
        <dbReference type="ChEBI" id="CHEBI:29105"/>
        <label>4</label>
    </ligand>
</feature>
<feature type="binding site" evidence="15">
    <location>
        <position position="4582"/>
    </location>
    <ligand>
        <name>Zn(2+)</name>
        <dbReference type="ChEBI" id="CHEBI:29105"/>
        <label>4</label>
    </ligand>
</feature>
<feature type="binding site" evidence="12">
    <location>
        <position position="4873"/>
    </location>
    <ligand>
        <name>Zn(2+)</name>
        <dbReference type="ChEBI" id="CHEBI:29105"/>
        <label>7</label>
    </ligand>
</feature>
<feature type="binding site" evidence="12">
    <location>
        <position position="4876"/>
    </location>
    <ligand>
        <name>Zn(2+)</name>
        <dbReference type="ChEBI" id="CHEBI:29105"/>
        <label>7</label>
    </ligand>
</feature>
<feature type="binding site" evidence="12">
    <location>
        <position position="4884"/>
    </location>
    <ligand>
        <name>Zn(2+)</name>
        <dbReference type="ChEBI" id="CHEBI:29105"/>
        <label>8</label>
    </ligand>
</feature>
<feature type="binding site" evidence="12">
    <location>
        <position position="4887"/>
    </location>
    <ligand>
        <name>Zn(2+)</name>
        <dbReference type="ChEBI" id="CHEBI:29105"/>
        <label>8</label>
    </ligand>
</feature>
<feature type="binding site" evidence="12">
    <location>
        <position position="4894"/>
    </location>
    <ligand>
        <name>Zn(2+)</name>
        <dbReference type="ChEBI" id="CHEBI:29105"/>
        <label>7</label>
    </ligand>
</feature>
<feature type="binding site" evidence="12">
    <location>
        <position position="4897"/>
    </location>
    <ligand>
        <name>Zn(2+)</name>
        <dbReference type="ChEBI" id="CHEBI:29105"/>
        <label>7</label>
    </ligand>
</feature>
<feature type="binding site" evidence="12">
    <location>
        <position position="4901"/>
    </location>
    <ligand>
        <name>Zn(2+)</name>
        <dbReference type="ChEBI" id="CHEBI:29105"/>
        <label>8</label>
    </ligand>
</feature>
<feature type="binding site" evidence="12">
    <location>
        <position position="4907"/>
    </location>
    <ligand>
        <name>Zn(2+)</name>
        <dbReference type="ChEBI" id="CHEBI:29105"/>
        <label>8</label>
    </ligand>
</feature>
<feature type="binding site" evidence="12">
    <location>
        <position position="4918"/>
    </location>
    <ligand>
        <name>Zn(2+)</name>
        <dbReference type="ChEBI" id="CHEBI:29105"/>
        <label>9</label>
    </ligand>
</feature>
<feature type="binding site" evidence="12">
    <location>
        <position position="4923"/>
    </location>
    <ligand>
        <name>Zn(2+)</name>
        <dbReference type="ChEBI" id="CHEBI:29105"/>
        <label>9</label>
    </ligand>
</feature>
<feature type="binding site" evidence="12">
    <location>
        <position position="4940"/>
    </location>
    <ligand>
        <name>Zn(2+)</name>
        <dbReference type="ChEBI" id="CHEBI:29105"/>
        <label>9</label>
    </ligand>
</feature>
<feature type="binding site" evidence="12">
    <location>
        <position position="4943"/>
    </location>
    <ligand>
        <name>Zn(2+)</name>
        <dbReference type="ChEBI" id="CHEBI:29105"/>
        <label>9</label>
    </ligand>
</feature>
<feature type="binding site" evidence="1">
    <location>
        <begin position="5150"/>
        <end position="5157"/>
    </location>
    <ligand>
        <name>ATP</name>
        <dbReference type="ChEBI" id="CHEBI:30616"/>
    </ligand>
</feature>
<feature type="binding site" evidence="20">
    <location>
        <position position="5674"/>
    </location>
    <ligand>
        <name>Zn(2+)</name>
        <dbReference type="ChEBI" id="CHEBI:29105"/>
        <label>10</label>
    </ligand>
</feature>
<feature type="binding site" evidence="20">
    <location>
        <position position="5676"/>
    </location>
    <ligand>
        <name>Zn(2+)</name>
        <dbReference type="ChEBI" id="CHEBI:29105"/>
        <label>10</label>
    </ligand>
</feature>
<feature type="binding site" evidence="20">
    <location>
        <position position="5692"/>
    </location>
    <ligand>
        <name>Zn(2+)</name>
        <dbReference type="ChEBI" id="CHEBI:29105"/>
        <label>10</label>
    </ligand>
</feature>
<feature type="binding site" evidence="20">
    <location>
        <position position="5695"/>
    </location>
    <ligand>
        <name>Zn(2+)</name>
        <dbReference type="ChEBI" id="CHEBI:29105"/>
        <label>10</label>
    </ligand>
</feature>
<feature type="binding site" evidence="20">
    <location>
        <position position="5723"/>
    </location>
    <ligand>
        <name>Zn(2+)</name>
        <dbReference type="ChEBI" id="CHEBI:29105"/>
        <label>11</label>
    </ligand>
</feature>
<feature type="binding site" evidence="20">
    <location>
        <position position="5727"/>
    </location>
    <ligand>
        <name>Zn(2+)</name>
        <dbReference type="ChEBI" id="CHEBI:29105"/>
        <label>11</label>
    </ligand>
</feature>
<feature type="binding site" evidence="20">
    <location>
        <position position="5730"/>
    </location>
    <ligand>
        <name>Zn(2+)</name>
        <dbReference type="ChEBI" id="CHEBI:29105"/>
        <label>11</label>
    </ligand>
</feature>
<feature type="binding site" evidence="20">
    <location>
        <position position="5745"/>
    </location>
    <ligand>
        <name>Zn(2+)</name>
        <dbReference type="ChEBI" id="CHEBI:29105"/>
        <label>11</label>
    </ligand>
</feature>
<feature type="binding site" evidence="21">
    <location>
        <begin position="5797"/>
        <end position="5803"/>
    </location>
    <ligand>
        <name>S-adenosyl-L-methionine</name>
        <dbReference type="ChEBI" id="CHEBI:59789"/>
    </ligand>
</feature>
<feature type="binding site" evidence="21">
    <location>
        <position position="5915"/>
    </location>
    <ligand>
        <name>Zn(2+)</name>
        <dbReference type="ChEBI" id="CHEBI:29105"/>
        <label>12</label>
    </ligand>
</feature>
<feature type="binding site" evidence="21">
    <location>
        <position position="5935"/>
    </location>
    <ligand>
        <name>Zn(2+)</name>
        <dbReference type="ChEBI" id="CHEBI:29105"/>
        <label>12</label>
    </ligand>
</feature>
<feature type="binding site" evidence="21">
    <location>
        <position position="5946"/>
    </location>
    <ligand>
        <name>Zn(2+)</name>
        <dbReference type="ChEBI" id="CHEBI:29105"/>
        <label>12</label>
    </ligand>
</feature>
<feature type="binding site" evidence="21">
    <location>
        <position position="5949"/>
    </location>
    <ligand>
        <name>Zn(2+)</name>
        <dbReference type="ChEBI" id="CHEBI:29105"/>
        <label>12</label>
    </ligand>
</feature>
<feature type="site" description="Cleavage; by PL-PRO" evidence="2">
    <location>
        <begin position="673"/>
        <end position="674"/>
    </location>
</feature>
<feature type="site" description="Cleavage; by PL-PRO" evidence="2">
    <location>
        <begin position="2265"/>
        <end position="2266"/>
    </location>
</feature>
<feature type="site" description="Cleavage; by 3CL-PRO" evidence="2">
    <location>
        <begin position="2779"/>
        <end position="2780"/>
    </location>
</feature>
<feature type="site" description="Cleavage; by 3CL-PRO" evidence="2">
    <location>
        <begin position="3086"/>
        <end position="3087"/>
    </location>
</feature>
<feature type="site" description="Cleavage; by 3CL-PRO" evidence="2">
    <location>
        <begin position="3379"/>
        <end position="3380"/>
    </location>
</feature>
<feature type="site" description="Cleavage; by 3CL-PRO" evidence="2">
    <location>
        <begin position="3462"/>
        <end position="3463"/>
    </location>
</feature>
<feature type="site" description="Cleavage; by 3CL-PRO" evidence="2">
    <location>
        <begin position="3672"/>
        <end position="3673"/>
    </location>
</feature>
<feature type="site" description="Cleavage; by 3CL-PRO" evidence="2">
    <location>
        <begin position="3783"/>
        <end position="3784"/>
    </location>
</feature>
<feature type="site" description="Cleavage; by 3CL-PRO" evidence="2">
    <location>
        <begin position="3928"/>
        <end position="3929"/>
    </location>
</feature>
<feature type="site" description="Cleavage; by 3CL-PRO" evidence="2">
    <location>
        <begin position="4868"/>
        <end position="4869"/>
    </location>
</feature>
<feature type="site" description="Cleavage; by 3CL-PRO" evidence="2">
    <location>
        <begin position="5468"/>
        <end position="5469"/>
    </location>
</feature>
<feature type="site" description="Cleavage; by 3CL-PRO" evidence="2">
    <location>
        <begin position="5989"/>
        <end position="5990"/>
    </location>
</feature>
<feature type="site" description="Cleavage; by 3CL-PRO" evidence="2">
    <location>
        <begin position="6327"/>
        <end position="6328"/>
    </location>
</feature>
<feature type="disulfide bond" evidence="27">
    <location>
        <begin position="1785"/>
        <end position="1811"/>
    </location>
</feature>
<feature type="disulfide bond" evidence="27">
    <location>
        <begin position="1802"/>
        <end position="1808"/>
    </location>
</feature>
<reference key="1">
    <citation type="submission" date="2001-05" db="EMBL/GenBank/DDBJ databases">
        <title>Recovery of the avian coronavirus infectious bronchitis virus from cDNA assembled in vaccinia virus.</title>
        <authorList>
            <person name="Casais R."/>
            <person name="Thiel V."/>
            <person name="Siddell S."/>
            <person name="Cavanagh D."/>
            <person name="Britton P."/>
        </authorList>
    </citation>
    <scope>NUCLEOTIDE SEQUENCE [GENOMIC RNA]</scope>
</reference>
<proteinExistence type="inferred from homology"/>
<evidence type="ECO:0000250" key="1"/>
<evidence type="ECO:0000250" key="2">
    <source>
        <dbReference type="UniProtKB" id="P0C6X7"/>
    </source>
</evidence>
<evidence type="ECO:0000250" key="3">
    <source>
        <dbReference type="UniProtKB" id="P0C6Y1"/>
    </source>
</evidence>
<evidence type="ECO:0000250" key="4">
    <source>
        <dbReference type="UniProtKB" id="P0C6Y3"/>
    </source>
</evidence>
<evidence type="ECO:0000250" key="5">
    <source>
        <dbReference type="UniProtKB" id="P0DTD1"/>
    </source>
</evidence>
<evidence type="ECO:0000255" key="6"/>
<evidence type="ECO:0000255" key="7">
    <source>
        <dbReference type="PROSITE-ProRule" id="PRU00214"/>
    </source>
</evidence>
<evidence type="ECO:0000255" key="8">
    <source>
        <dbReference type="PROSITE-ProRule" id="PRU00444"/>
    </source>
</evidence>
<evidence type="ECO:0000255" key="9">
    <source>
        <dbReference type="PROSITE-ProRule" id="PRU00490"/>
    </source>
</evidence>
<evidence type="ECO:0000255" key="10">
    <source>
        <dbReference type="PROSITE-ProRule" id="PRU00539"/>
    </source>
</evidence>
<evidence type="ECO:0000255" key="11">
    <source>
        <dbReference type="PROSITE-ProRule" id="PRU00772"/>
    </source>
</evidence>
<evidence type="ECO:0000255" key="12">
    <source>
        <dbReference type="PROSITE-ProRule" id="PRU00986"/>
    </source>
</evidence>
<evidence type="ECO:0000255" key="13">
    <source>
        <dbReference type="PROSITE-ProRule" id="PRU01291"/>
    </source>
</evidence>
<evidence type="ECO:0000255" key="14">
    <source>
        <dbReference type="PROSITE-ProRule" id="PRU01292"/>
    </source>
</evidence>
<evidence type="ECO:0000255" key="15">
    <source>
        <dbReference type="PROSITE-ProRule" id="PRU01293"/>
    </source>
</evidence>
<evidence type="ECO:0000255" key="16">
    <source>
        <dbReference type="PROSITE-ProRule" id="PRU01294"/>
    </source>
</evidence>
<evidence type="ECO:0000255" key="17">
    <source>
        <dbReference type="PROSITE-ProRule" id="PRU01295"/>
    </source>
</evidence>
<evidence type="ECO:0000255" key="18">
    <source>
        <dbReference type="PROSITE-ProRule" id="PRU01296"/>
    </source>
</evidence>
<evidence type="ECO:0000255" key="19">
    <source>
        <dbReference type="PROSITE-ProRule" id="PRU01297"/>
    </source>
</evidence>
<evidence type="ECO:0000255" key="20">
    <source>
        <dbReference type="PROSITE-ProRule" id="PRU01298"/>
    </source>
</evidence>
<evidence type="ECO:0000255" key="21">
    <source>
        <dbReference type="PROSITE-ProRule" id="PRU01299"/>
    </source>
</evidence>
<evidence type="ECO:0000255" key="22">
    <source>
        <dbReference type="PROSITE-ProRule" id="PRU01300"/>
    </source>
</evidence>
<evidence type="ECO:0000255" key="23">
    <source>
        <dbReference type="PROSITE-ProRule" id="PRU01303"/>
    </source>
</evidence>
<evidence type="ECO:0000255" key="24">
    <source>
        <dbReference type="PROSITE-ProRule" id="PRU01305"/>
    </source>
</evidence>
<evidence type="ECO:0000255" key="25">
    <source>
        <dbReference type="PROSITE-ProRule" id="PRU01306"/>
    </source>
</evidence>
<evidence type="ECO:0000255" key="26">
    <source>
        <dbReference type="PROSITE-ProRule" id="PRU01336"/>
    </source>
</evidence>
<evidence type="ECO:0000255" key="27">
    <source>
        <dbReference type="PROSITE-ProRule" id="PRU01337"/>
    </source>
</evidence>
<evidence type="ECO:0000255" key="28">
    <source>
        <dbReference type="PROSITE-ProRule" id="PRU01344"/>
    </source>
</evidence>
<evidence type="ECO:0000256" key="29">
    <source>
        <dbReference type="SAM" id="MobiDB-lite"/>
    </source>
</evidence>
<evidence type="ECO:0000305" key="30"/>
<name>R1AB_IBVBC</name>
<sequence length="6629" mass="744566">MASSLKQGVSPKPRDVILVSKDIPEQLCDALFFYTSHNPKDYADAFAVRQKFDRSLQTGKQFKFETVCGLFLLKGVDKITPGVPAKVLKATSKLADLEDIFGVSPLARKYRELLKTACQWSLTVEALDVRAQTLDEIFDPTEILWLQVAAKIHVSSMAMRRLVGEVTAKVMDALGSNLSALFQIVKQQIARIFQKALAIFENVNELPQRIAALKMAFAKCARSITVVVVERTLVVKEFAGTCLASINGAVAKFFEELPNGFMGSKIFTTLAFFKEAAVRVVENIPNAPRGTKGFEVVGNAKGTQVVVRGMRNDLTLLDQKADIPVEPEGWSAILDGHLCYVFRSGDRFYAAPLSGNFALSDVHCCERVVCLSDGVTPEINDGLILAAIYSSFSVSELVTALKKGEPFKFLGHKFVYAKDAAVSFTLAKAATIADVLRLFQSARVIAEDVWSSFTEKSFEFWKLAYGKVRNLEEFVKTYVCKAQMSIVILAAVLGEDIWHLVSQVIYKLGVLFTKVVDFCDKHWKGFCVQLKRAKLIVTETFCVLKGVAQHCFQLLLDAIHSLYKSFKKCALGRIHGDLLFWKGGVHKIVQDGDEIWFDAIDSVDVEDLGVVQEKSIDFEVCDDVTLPENQPGHMVQIEDDGKNYMFFRFKKDENIYYTPMSQLGAINVVCKAGGKTVTFGETTVQEIPPPDVVPIKVSIECCGEPWNTIFKKAYKEPIEVDTDLTVEQLLSVIYEKMCDDLKLFPEAPEPPPFENVALVDKNGKDLDCIKSCHLIYRDYESDDDIEEEDAEECDTDSGEAEECDTNSECEEEDEDTKVLALIQDPASIKYPLPLDEDYSVYNGCIVHKDALDVVNLPSGEETFVVNNCFEGAVKPLPQKVVDVLGDWGEAVDAQEQLCQQEPLQHTFEEPVENSTGSSKTMTEQVVVEDQELPVVEQDQDVVVYTPTDLEVAKETAEEVDEFILIFAVPKEEVVSQKDGAQIKQEPIQVVKPQREKKAKKFKVKPATCEKPKFLEYKTCVGDLTVVIAKALDEFKEFCIVNAANEHMTHGSGVAKAIADFCGLDFVEYCEDYVKKHGPQQRLVTPSFVKGIQCVNNVVGPRHGDNNLHEKLVAAYKNVLVDGVVNYVVPVLSLGIFGVDFKMSIDAMREAFEGCTIRVLLFSLSQEHIDYFDVTCKQKTIYLTEDGVKYRSIVLKPGDSLGQFGQVYAKNKIVFTADDVEDKEILYVPTTDKSILEYYGLDAQKYVIYLQTLAQKWNVQYRDNFLILEWRDGNCWISSAIVLLQAAKIRFKGFLTEAWAKLLGGDPTDFVAWCYASCTAKVGDFSDANWLLANLAEHFDADYTNAFLKKRVSCNCGIKSYELRGLEACIQPVRATNLLHFKTQYSNCPTCGANNTDEVIEASLPYLLLFATDGPATVDCDEDAVGTVVFVGSTNSGHCYTQAAGQAFDNLAKDRKFGKKSPYITAMYTRFAFKNETSLPVAKQSKGKSKSVKEDVSNLATSSKASFDNLTDFEQWYDSNIYESLKVQESPDNFDKYVSFTTKEDSKLPLTLKVRGIKSVVDFRSKDGFIYKLTPDTDENSKAPVYYPVLDAISLKAIWVEGNANFVVGHPNYYSKSLHIPTFWENAENFVKMGDKIGGVTMGLWRAEHLNKPNLERIFNIAKKAIVGSSVVTTQCGKLIGKAATFIADKVGGGVVRNITDSIKGLCGITRGHFERKMSPQFLKTLMFFLFYFLKASVKSVVASYKTVLCKVVLATLLIVWFVYTSNPVMFTGIRVLDFLFEGSLCGPYKDYGKDSFDVLRYCADDFICRVCLHDKDSLHLYKHAYSVEQVYKDAASGFIFNWNWLYLVFLILFVKPVAGFVIICYCVKYLVLNSTVLQTGVCFLDWFVQTVFSHFNFMGAGFYFWLFYKIYIQVHHILYCKDVTCEVCKRVARSNRQEVSVVVGGRKQIVHVYTNSGYNFCKRHNWYCRNCDDYGHQNTFMSPEVAGELSEKLKRHVKPTAYAYHVVDEACLVDDFVNLKYKAATPGKDSASSAVKCFSVTDFLKKAVFLKEALKCEQISNDGFIVCNTQSAHALEEAKNAAIYYAQYLCKPILILDQALYEQLVVEPVSKSVIDKVCSILSSIISVDTAALNYKAGTLRDALLSITKDEEAVDMAIFCHNHDVDYTGDGFTNVIPSYGIDTGKLTPRDRGFLINADASIANLRVKNAPPVVWKFSELIKLSDSCLKYLISATVKSGVRFFITKSGAKQVIACHTQKLLVEKKAGGIVSGTFKCFKSYFKWLLIFYILFTACCSGYYYMEVSKSFVHPMYDVNSTLHVEGFKVIDKGVLREIVPEDTCFSNKFVNFDAFWGRPYDNSRNCPIVTAVIDGDGTVATGVPGFVSWVMDGVMFIHMTQTERKPWYIPTWFNREIVGYTQDSIITEGSFYTSIALFSARCLYLTASNTPQLYCFNGDNDAPGALPFGSIIPHRVYFQPNGVRLIVPQQILHTPYVVKFVSDSYCRGSVCEYTRPGYCVSLNPQWVLFNDEYTSKPGVFCGSTVRELMFSMVSTFFTGVNPNIYMQLATMFLILVVVVLIFAMVIKFQGVFKAYATTVFITMLVWVINAFILCVHSYNSVLAVILLVLYCYASLVTSRNTVIIMHCWLVFTFGLIVPTWLACCYLGFIIYMYTPLFLWCYGTTKNTRKLYDGNEFVGNYDLAAKSTFVIRGSEFVKLTNEIGDKFEAYLSAYARLKYYSGTGSEQDYLQACRAWLAYALDQYRNSGVEIVYTPPRYSIGVSRLQSGFKKLVSPSSAVEKCIVSVSYRGNNLNGLWLGDTIYCPRHVLGKFSGDQWNDVLNLANNHEFEVTTQHGVTLNVVSRRLKGAVLILQTAVANAETPKYKFIKANCGDSFTIACAYGGTVVGLYPVTMRSNGTIRASFLAGACGSVGFNIEKGVVNFFYMHHLELPNALHTGTDLMGEFYGGYVDEEVAQRVPPDNLVTNNIVAWLYAAIISVKESSFSLPKWLESTTVSVDDYNKWAGDNGFTPFSTSTAITKLSAITGVDVCKLLRTIMVKNSQWGGDPILGQYNFEDELTPESVFNQIGGVRLQSSFVRKATSWFWSRCVLACFLFVLCAIVLFTAVPLKFYVYAAVILLMAVLFISFTVKHVMAYMDTFLLPTLITVIIGVCAEVPFIYNTLISQVVIFLSQWYDPVVFDTMVPWMFLPLVLYTAFKCVQGCYMNSFNTSLLMLYQFVKLGFVIYTSSNTLTAYTEGNWELFFELVHTTVLANVSSNSLIGLFVFKCAKWMLYYCNATYLNNYVLMAVMVNCIGWLCTCYFGLYWWVNKVFGLTLGKYNFKVSVDQYRYMCLHKINPPKTVWEVFSTNILIQGIGGDRVLPIATVQAKLSDVKCTTVVLMQLLTKLNVEANSKMHVYLVELHNKILASDDVGECMDNLLGMLITLFCIDSTIDLSEYCDDILKRSTVLQSVTQEFSHIPSYAEYERAKNLYEKVLVDSKNGGVTQQELAAYRKAANIAKSVFDRDLAVQKKLDSMAERAMTTMYKEARVTDRRAKLVSSLHALLFSMLKKIDSEKLNVLFDQASSGVVPLATVPIVCSNKLTLVIPDPETWVKCVEGVHVTYSTVVWNIDTVIDADGTELHPTSTGSGLTYCISGANIAWPLKVNLTRNGHNKVDVVLQNNELMPHGVKTKACVAGVDQAHCSVESKCYYTNISGNSVVAAITSSNPNLKVASFLNEAGNQIYVDLDPPCKFGMKVGVKVEVVYLYFIKNTRSIVRGMVLGAISNVVVLQSKGHETEEVDAVGILSLCSFAVDPADTYCKYVAAGNQPLGNCVKMLTVHNGSGFAITSKPSPTPDQDSYGGASVCLYCRAHIAHPGSVGNLDGRCQFKGSFVQIPTTEKDPVGFCLRNKVCTVCQCWIGYGCQCDSLRQPKSSVQSVAGASDFDKNYLNRVRGSSEARLIPLASGCDPDVVKRAFDVCNKESAGMFQNLKRNCARFQELRDTEDGNLEYLDSYFVVKQTTPSNYEHEKSCYEDLKSEVTADHDFFVFNKNIYNISRQRLTKYTMMDFCYALRHFDPKDCEVLKEILVTYGCIEDYHPKWFEENKDWYDPIENSKYYVMLAKMGPIVRRALLNAIEFGNLMVEKGYVGVITLDNQDLNGKFYDFGDFQKTAPGAGVPVFDTYYSYMMPIIAMTDALAPERYFEYDVHKGYKSYDLLKYDYTEEKQELFQKYFKYWDQEYHPNCRDCSDDRCLIHCANFNILFSTLIPQTSFGNLCRKVFVDGVPFIATCGYHSKELGVIMNQDNTMSFSKMGLSQLMQFVGDPALLVGTSNNLVDLRTSCFSVCALTSGITHQTVKPGHFNKDFYDFAEKAGMFKEGSSIPLKHFFYPQTGNAAINDYDYYRYNRPTMFDICQLLFCLEVTSKYFECYEGGCIPASQVVVNNLDKSAGYPFNKFGKARLYYEMSLEEQDQLFEITKKNVLPTITQMNLKYAISAKNRARTVAGVSILSTMTNRQFHQKILKSIVNTRNASVVIGTTKFYGGWDNMLRNLIQGVEDPILMGWDYPKCDRAMPNLLRIAASLVLARKHTNCCSWSERIYRLYNECAQVLSETVLATGGIYVKPGGTSSGDATTAYANSVFNIIQATSANVARLLSVITRDIVYDNIKSLQYELYQQVYRRVNFDPAFVEKFYSYLCKNFSLMILSDDGVVCYNNTLAKQGLVADISGFREVLYYQNNVFMADSKCWVEPDLEKGPHEFCSQHTMLVEVDGEPKYLPYPDPSRILGACVFVDDVDKTEPVAVMERYIALAIDAYPLVHHENEEYKKVFFVLLAYIRKLYQELSQNMLMDYSFVMDIDKGSKFWEQEFYENMYRAPTTLQSCGVCVVCNSQTILRCGNCIRKPFLCCKCCYDHVMHTDHKNVLSINPYICSQLGCGEADVTKLYLGGMSYFCGNHKPKLSIPLVSNGTVFGIYRANCAGSENVDDFNQLATTNWSIVEPYILANRCSDSLRRFAAETVKATEELHKQQFASAEVREVFSDRELILSWEPGKTRPPLNRNYVFTGYHFTRTSKVQLGDFTFEKGEGKDVVYYKATSTAKLSVGDIFVLTSHNVVSLVAPTLCPQQTFSRFVNLRPNVMVPECFVNNIPLYHLVGKQKRTTVQGPPGSGKSHFAIGLAVYFSSARVVFTACSHAAVDALCEKAFKFLKVDDCTRIVPQRTTVDCFSKFKANDTGKKYIFSTINALPEVSCDILLVDEVSMLTNYELSFINGKINYQYVVYVGDPAQLPAPRTLLNGSLSPKDYNVVTNLMVCVKPDIFLAKCYRCPKEIVDTVSTLVYDGKFIANNPESRECFKVIVNNGNSDVGHESGSAYNTTQLEFVKDFVCRNKQWREAIFISPYNAMNQRAYRMLGLNVQTVDSSQGSEYDYVIFCVTADSQHALNINRFNVALTRAKRGILVVMRQRDELYSALKFTELDSETSLQGTGLFKICNKEFSGVHPAYAVTTKALAATYKVNDELAALVNVEAGSEITYKHLISLLGFKMSVNVEGCHNMFITRDEAIRNVRGWVGFDVEATHACGTNIGTNLPFQVGFSTGADFVVTPEGLVDTSIGNNFEPVNSKAPPGEQFNHLRVLFKSAKPWHVIRPRIVQMLADNLCNVSDCVVFVTWCHGLELTTLRYFVKIGKEQVCSCGSRATTFNSHTQAYACWKHCLGFDFVYNPLLVDIQQWGYSGNLQFNHDLHCNVHGHAHVASVDAIMTRCLAINNAFCQDVNWDLTYPHIANEDEVNSSCRYLQRMYLNACVDALKVNVVYDIGNPKGIKCVRRGDVNFRFYDKNPIVRNVKQFEYDYNQHKDKFADGLCMFWNCNVDCYPDNSLVCRYDTRNLSVFNLPGCNGGSLYVNKHAFYTPKFDRISFRNLKAMPFFFYDSSPCETIQVDGVAQDLVSLATKDCITKCNIGGAVCKKHAQMYAEFVTSYNAAVTAGFTFWVTNKLNPYNLWKSFSALQSIDNIAYNMYKGGHYDAIAGEMPTVITGDKVFVIDQGVEKAVFVNQTTLPTSVAFELYAKRNIRTLPNNRILKGLGVDVTNGFVIWDYANQTPLYRNTVKVCAYTDIEPNGLVVLYDDRYGDYQSFLAADNAVLVSTQCYKRYSYVEIPSNLLVQNGMPLKDGANLYVYKRVNGAFVTLPNTINTQGRSYETFEPRSDIERDFLAMSEESFVERYGKDLGLQHILYGEVDKPQLGGLHTVIGMYRLLRANKLNAKSVTNSDSDVMQNYFVLSDNGSYKQVCTVVDLLLDDFLELLRNILKEYGTNKSKVVTVSIDYHSINFMTWFEDGSIKTCYPQLQSAWTCGYNMPELYKVQNCVMEPCNIPNYGVGITLPSGILMNVAKYTQLCQYLLKTTICVPHNMRVMHFGAGSDKGVAPGSTVLKQWLPEGTLLVDNDIVDYVSDAHVSVLSDCNKYNTEHKFDLVISDMYTDNDSKRKHEGVIANNGNDDVFIYLSSFLRNNLALGGSFAVKVTETSWHEVLYDIAQDCAWWTMFCTAVNASSSEAFLIGVNYLGASEKVKVSGKTLHANYIFWRNCNYLQTSAYSIFDVAKFDLRLKATPVVNLKTEQKTDLVFNLIKCGKLLVRDVGNTSFTSDSFVCTM</sequence>
<organismHost>
    <name type="scientific">Gallus gallus</name>
    <name type="common">Chicken</name>
    <dbReference type="NCBI Taxonomy" id="9031"/>
</organismHost>
<comment type="function">
    <molecule>Isoform Replicase polyprotein 1ab</molecule>
    <text evidence="30">Multifunctional protein involved in the transcription and replication of viral RNAs. Contains the proteinases responsible for the cleavages of the polyprotein.</text>
</comment>
<comment type="function">
    <molecule>Non-structural protein 2</molecule>
    <text evidence="2">May play a role in the modulation of host cell survival signaling pathway by interacting with host PHB and PHB2 (By similarity). Indeed, these two proteins play a role in maintaining the functional integrity of the mitochondria and protecting cells from various stresses (By similarity).</text>
</comment>
<comment type="function">
    <molecule>Papain-like protease</molecule>
    <text evidence="2">Responsible for the cleavages located at the N-terminus of the replicase polyprotein (By similarity). In addition, PL-PRO possesses a deubiquitinating/deISGylating activity and processes both 'Lys-48'- and 'Lys-63'-linked polyubiquitin chains from cellular substrates (By similarity).</text>
</comment>
<comment type="function">
    <molecule>Non-structural protein 4</molecule>
    <text evidence="4">Plays a role in host membrane rearrangement that leads to creation of cytoplasmic double-membrane vesicles (DMV) necessary for viral replication (By similarity). Alone is able to induce paired membranes (By similarity). Coexpression of nsp3 and nsp4 does not result in the formation of DMVs (By similarity).</text>
</comment>
<comment type="function">
    <molecule>3C-like proteinase</molecule>
    <text evidence="11">Responsible for the majority of cleavages as it cleaves the C-terminus of replicase polyprotein at 11 sites. Recognizes substrates containing the core sequence [ILMVF]-Q-|-[SGACN]. Inhibited by the substrate-analog Cbz-Val-Asn-Ser-Thr-Leu-Gln-CMK.</text>
</comment>
<comment type="function">
    <molecule>Non-structural protein 7</molecule>
    <text evidence="2">Forms a hexadecamer with nsp8 (8 subunits of each) that may participate in viral replication by acting as a primase. Alternatively, may synthesize substantially longer products than oligonucleotide primers.</text>
</comment>
<comment type="function">
    <molecule>Non-structural protein 8</molecule>
    <text evidence="2">Forms a hexadecamer with nsp7 (8 subunits of each) that may participate in viral replication by acting as a primase. Alternatively, may synthesize substantially longer products than oligonucleotide primers.</text>
</comment>
<comment type="function">
    <molecule>Viral protein genome-linked nsp9</molecule>
    <text evidence="5">Forms a primer, NSP9-pU, which is utilized by the polymerase for the initiation of RNA chains. Interacts with ribosome signal recognition particle RNA (SRP). Together with NSP8, suppress protein integration into the cell membrane, thereby disrupting host immune defenses.</text>
</comment>
<comment type="function">
    <molecule>Non-structural protein 10</molecule>
    <text evidence="2">Plays a pivotal role in viral transcription by stimulating both nsp14 3'-5' exoribonuclease and nsp16 2'-O-methyltransferase activities (By similarity). Therefore plays an essential role in viral mRNAs cap methylation (By similarity).</text>
</comment>
<comment type="function">
    <molecule>RNA-directed RNA polymerase nsp12</molecule>
    <text evidence="5">RNA-directed RNA polymerase that catalyzes the transcription of viral genomic and subgenomic RNAs. Acts in complex with nsp7 and nsp8 to transcribe both the minus and positive strands of genomic RNA. The kinase-like NiRAN domain of NSP12 attaches one or more nucleotides to the amino terminus of NSP9, forming a covalent RNA-protein intermediate that serves as transcription/replication primer. Subgenomic RNAs (sgRNAs) are formed by discontinuous transcription: The polymerase has the ability to pause at transcription-regulating sequences (TRS) and jump to the leader TRS, resulting in a major deletion. This creates a series of subgenomic RNAs that are replicated, transcribed and translated. In addition, Nsp12 is a subunit of the viral RNA capping enzyme that catalyzes the RNA guanylyltransferase reaction for genomic and sub-genomic RNAs. Subsequently, the NiRAN domain transfers RNA to GDP, and forms the core cap structure GpppA-RNA.</text>
</comment>
<comment type="function">
    <molecule>Helicase</molecule>
    <text evidence="2">Multi-functional protein with a zinc-binding domain in N-terminus displaying RNA and DNA duplex-unwinding activities with 5' to 3' polarity. Activity of helicase is dependent on magnesium.</text>
</comment>
<comment type="function">
    <molecule>Proofreading exoribonuclease</molecule>
    <text evidence="2">Enzyme possessing two different activities: an exoribonuclease activity acting on both ssRNA and dsRNA in a 3' to 5' direction and a N7-guanine methyltransferase activity (By similarity). Acts as a proofreading exoribonuclease for RNA replication, thereby lowering The sensitivity of the virus to RNA mutagens (By similarity).</text>
</comment>
<comment type="function">
    <molecule>Uridylate-specific endoribonuclease</molecule>
    <text evidence="2">Plays a role in viral transcription/replication and prevents the simultaneous activation of host cell dsRNA sensors, such as MDA5/IFIH1, OAS, and PKR (By similarity). Acts by degrading the 5'-polyuridines generated during replication of the poly(A) region of viral genomic and subgenomic RNAs (By similarity). Catalyzes a two-step reaction in which a 2'3'-cyclic phosphate (2'3'-cP) is first generated by 2'-O transesterification, which is then hydrolyzed to a 3'-phosphate (3'-P) (By similarity). If not degraded, poly(U) RNA would hybridize with poly(A) RNA tails and activate host dsRNA sensors (By similarity).</text>
</comment>
<comment type="function">
    <molecule>2'-O-methyl transferase</molecule>
    <text evidence="2">Methyltransferase that mediates mRNA cap 2'-O-ribose methylation to the 5'-cap structure of viral mRNAs. N7-methyl guanosine cap is a prerequisite for binding of nsp16. Therefore plays an essential role in viral mRNAs cap methylation which is essential to evade immune system.</text>
</comment>
<comment type="catalytic activity">
    <molecule>RNA-directed RNA polymerase nsp12</molecule>
    <reaction evidence="10">
        <text>RNA(n) + a ribonucleoside 5'-triphosphate = RNA(n+1) + diphosphate</text>
        <dbReference type="Rhea" id="RHEA:21248"/>
        <dbReference type="Rhea" id="RHEA-COMP:14527"/>
        <dbReference type="Rhea" id="RHEA-COMP:17342"/>
        <dbReference type="ChEBI" id="CHEBI:33019"/>
        <dbReference type="ChEBI" id="CHEBI:61557"/>
        <dbReference type="ChEBI" id="CHEBI:140395"/>
        <dbReference type="EC" id="2.7.7.48"/>
    </reaction>
</comment>
<comment type="catalytic activity">
    <molecule>Helicase</molecule>
    <reaction evidence="2">
        <text>ATP + H2O = ADP + phosphate + H(+)</text>
        <dbReference type="Rhea" id="RHEA:13065"/>
        <dbReference type="ChEBI" id="CHEBI:15377"/>
        <dbReference type="ChEBI" id="CHEBI:15378"/>
        <dbReference type="ChEBI" id="CHEBI:30616"/>
        <dbReference type="ChEBI" id="CHEBI:43474"/>
        <dbReference type="ChEBI" id="CHEBI:456216"/>
        <dbReference type="EC" id="3.6.4.12"/>
    </reaction>
</comment>
<comment type="catalytic activity">
    <molecule>Helicase</molecule>
    <reaction evidence="2">
        <text>ATP + H2O = ADP + phosphate + H(+)</text>
        <dbReference type="Rhea" id="RHEA:13065"/>
        <dbReference type="ChEBI" id="CHEBI:15377"/>
        <dbReference type="ChEBI" id="CHEBI:15378"/>
        <dbReference type="ChEBI" id="CHEBI:30616"/>
        <dbReference type="ChEBI" id="CHEBI:43474"/>
        <dbReference type="ChEBI" id="CHEBI:456216"/>
        <dbReference type="EC" id="3.6.4.13"/>
    </reaction>
</comment>
<comment type="catalytic activity">
    <molecule>Papain-like protease</molecule>
    <reaction evidence="3">
        <text>Thiol-dependent hydrolysis of ester, thioester, amide, peptide and isopeptide bonds formed by the C-terminal Gly of ubiquitin (a 76-residue protein attached to proteins as an intracellular targeting signal).</text>
        <dbReference type="EC" id="3.4.19.12"/>
    </reaction>
</comment>
<comment type="catalytic activity">
    <molecule>Uridylate-specific endoribonuclease</molecule>
    <reaction evidence="2">
        <text>uridylyl-uridylyl-ribonucleotide-RNA = a 3'-end uridylyl-2',3'-cyclophospho-uridine-RNA + a 5'-end dephospho-ribonucleoside-RNA</text>
        <dbReference type="Rhea" id="RHEA:67732"/>
        <dbReference type="Rhea" id="RHEA-COMP:13936"/>
        <dbReference type="Rhea" id="RHEA-COMP:17334"/>
        <dbReference type="Rhea" id="RHEA-COMP:17335"/>
        <dbReference type="ChEBI" id="CHEBI:138284"/>
        <dbReference type="ChEBI" id="CHEBI:173079"/>
        <dbReference type="ChEBI" id="CHEBI:173080"/>
    </reaction>
</comment>
<comment type="catalytic activity">
    <molecule>RNA-directed RNA polymerase nsp12</molecule>
    <reaction evidence="5">
        <text>a 5'-end diphospho-ribonucleoside in mRNA + GTP + H(+) = a 5'-end (5'-triphosphoguanosine)-ribonucleoside in mRNA + diphosphate</text>
        <dbReference type="Rhea" id="RHEA:67012"/>
        <dbReference type="Rhea" id="RHEA-COMP:17165"/>
        <dbReference type="Rhea" id="RHEA-COMP:17166"/>
        <dbReference type="ChEBI" id="CHEBI:15378"/>
        <dbReference type="ChEBI" id="CHEBI:33019"/>
        <dbReference type="ChEBI" id="CHEBI:37565"/>
        <dbReference type="ChEBI" id="CHEBI:167616"/>
        <dbReference type="ChEBI" id="CHEBI:167617"/>
        <dbReference type="EC" id="2.7.7.50"/>
    </reaction>
    <physiologicalReaction direction="left-to-right" evidence="5">
        <dbReference type="Rhea" id="RHEA:67013"/>
    </physiologicalReaction>
</comment>
<comment type="catalytic activity">
    <molecule>2'-O-methyl transferase</molecule>
    <reaction evidence="2">
        <text>a 5'-end (N(7)-methyl 5'-triphosphoguanosine)-ribonucleoside in mRNA + S-adenosyl-L-methionine = a 5'-end (N(7)-methyl 5'-triphosphoguanosine)-(2'-O-methyl-ribonucleoside) in mRNA + S-adenosyl-L-homocysteine + H(+)</text>
        <dbReference type="Rhea" id="RHEA:67020"/>
        <dbReference type="Rhea" id="RHEA-COMP:17167"/>
        <dbReference type="Rhea" id="RHEA-COMP:17168"/>
        <dbReference type="ChEBI" id="CHEBI:15378"/>
        <dbReference type="ChEBI" id="CHEBI:57856"/>
        <dbReference type="ChEBI" id="CHEBI:59789"/>
        <dbReference type="ChEBI" id="CHEBI:156461"/>
        <dbReference type="ChEBI" id="CHEBI:167609"/>
        <dbReference type="EC" id="2.1.1.57"/>
    </reaction>
</comment>
<comment type="cofactor">
    <molecule>Uridylate-specific endoribonuclease</molecule>
    <cofactor evidence="2">
        <name>Mn(2+)</name>
        <dbReference type="ChEBI" id="CHEBI:29035"/>
    </cofactor>
    <text evidence="2">Likely affects Nsp15 binding to RNA.</text>
</comment>
<comment type="cofactor">
    <molecule>Papain-like protease</molecule>
    <cofactor evidence="2">
        <name>Zn(2+)</name>
        <dbReference type="ChEBI" id="CHEBI:29105"/>
    </cofactor>
</comment>
<comment type="subunit">
    <molecule>Non-structural protein 2</molecule>
    <text evidence="2">Interacts with host PHB and PHB2.</text>
</comment>
<comment type="subunit">
    <molecule>Non-structural protein 4</molecule>
    <text evidence="2">Interacts with papain-like protease and non-structural protein 6.</text>
</comment>
<comment type="subunit">
    <molecule>3C-like proteinase</molecule>
    <text evidence="2">Monomer. Homodimer. Only the homodimer shows catalytic activity.</text>
</comment>
<comment type="subunit">
    <molecule>Non-structural protein 7</molecule>
    <text evidence="2">Eight copies of nsp7 and eight copies of nsp8 assemble to form a heterohexadecamer dsRNA-encircling ring structure.</text>
</comment>
<comment type="subunit">
    <molecule>Non-structural protein 8</molecule>
    <text evidence="2">Eight copies of nsp7 and eight copies of nsp8 assemble to form a heterohexadecamer dsRNA-encircling ring structure (By similarity). Interacts with ORF6 protein (By similarity).</text>
</comment>
<comment type="subunit">
    <molecule>Viral protein genome-linked nsp9</molecule>
    <text evidence="4">Homodimer.</text>
</comment>
<comment type="subunit">
    <molecule>Non-structural protein 10</molecule>
    <text evidence="2">Homododecamer (By similarity). Interacts with proofreading exoribonuclease nsp14 and 2'-O-methyltransferase nsp16; these interactions enhance nsp14 and nsp16 enzymatic activities (By similarity).</text>
</comment>
<comment type="subunit">
    <molecule>Proofreading exoribonuclease</molecule>
    <text evidence="3">Interacts with host DDX1 (via C-terminus) (By similarity). Interacts with non-structural protein 10 (By similarity).</text>
</comment>
<comment type="subunit">
    <molecule>Uridylate-specific endoribonuclease</molecule>
    <text evidence="2">Homohexamer.</text>
</comment>
<comment type="subunit">
    <molecule>2'-O-methyl transferase</molecule>
    <text evidence="2">Interacts with non-structural protein 10.</text>
</comment>
<comment type="subcellular location">
    <molecule>Papain-like protease</molecule>
    <subcellularLocation>
        <location evidence="4">Host endoplasmic reticulum membrane</location>
        <topology evidence="30">Multi-pass membrane protein</topology>
    </subcellularLocation>
    <subcellularLocation>
        <location evidence="2">Host cytoplasm</location>
    </subcellularLocation>
    <text evidence="4">Gammacoronaviruses induce membrane zippering to form zippered endoplasmic reticulum (zER).</text>
</comment>
<comment type="subcellular location">
    <molecule>Non-structural protein 4</molecule>
    <subcellularLocation>
        <location evidence="4">Host endoplasmic reticulum membrane</location>
        <topology evidence="30">Multi-pass membrane protein</topology>
    </subcellularLocation>
    <subcellularLocation>
        <location evidence="2">Host cytoplasm</location>
    </subcellularLocation>
    <text evidence="2 4">Localizes in virally-induced cytoplasmic double-membrane vesicles (By similarity). Gammacoronaviruses induce membrane zippering to form zippered endoplasmic reticulum (zER) (By similarity).</text>
</comment>
<comment type="subcellular location">
    <molecule>Non-structural protein 6</molecule>
    <subcellularLocation>
        <location evidence="4">Host endoplasmic reticulum membrane</location>
        <topology evidence="30">Multi-pass membrane protein</topology>
    </subcellularLocation>
    <text evidence="4">Gammacoronaviruses induce membrane zippering to form zippered endoplasmic reticulum (zER).</text>
</comment>
<comment type="subcellular location">
    <molecule>Non-structural protein 7</molecule>
    <subcellularLocation>
        <location evidence="1">Host cytoplasm</location>
        <location evidence="1">Host perinuclear region</location>
    </subcellularLocation>
    <subcellularLocation>
        <location evidence="5">Host cytoplasm</location>
    </subcellularLocation>
    <subcellularLocation>
        <location evidence="5">Host endoplasmic reticulum</location>
    </subcellularLocation>
    <text>nsp7, nsp8, nsp9 and nsp10 are localized in cytoplasmic foci, largely perinuclear. Late in infection, they merge into confluent complexes.</text>
</comment>
<comment type="subcellular location">
    <molecule>Non-structural protein 8</molecule>
    <subcellularLocation>
        <location evidence="2">Host cytoplasm</location>
        <location evidence="2">Host perinuclear region</location>
    </subcellularLocation>
    <subcellularLocation>
        <location evidence="5">Host cytoplasm</location>
    </subcellularLocation>
    <subcellularLocation>
        <location evidence="5">Host endoplasmic reticulum</location>
    </subcellularLocation>
    <text>nsp7, nsp8, nsp9 and nsp10 are localized in cytoplasmic foci, largely perinuclear. Late in infection, they merge into confluent complexes.</text>
</comment>
<comment type="subcellular location">
    <molecule>Viral protein genome-linked nsp9</molecule>
    <subcellularLocation>
        <location evidence="1">Host cytoplasm</location>
        <location evidence="1">Host perinuclear region</location>
    </subcellularLocation>
    <subcellularLocation>
        <location evidence="5">Host cytoplasm</location>
    </subcellularLocation>
    <subcellularLocation>
        <location evidence="5">Host endoplasmic reticulum</location>
    </subcellularLocation>
    <text>nsp7, nsp8, nsp9 and nsp10 are localized in cytoplasmic foci, largely perinuclear. Late in infection, they merge into confluent complexes.</text>
</comment>
<comment type="subcellular location">
    <molecule>Non-structural protein 10</molecule>
    <subcellularLocation>
        <location evidence="1">Host cytoplasm</location>
        <location evidence="1">Host perinuclear region</location>
    </subcellularLocation>
    <subcellularLocation>
        <location evidence="5">Host cytoplasm</location>
    </subcellularLocation>
    <subcellularLocation>
        <location evidence="5">Host endoplasmic reticulum</location>
    </subcellularLocation>
    <text>nsp7, nsp8, nsp9 and nsp10 are localized in cytoplasmic foci, largely perinuclear. Late in infection, they merge into confluent complexes.</text>
</comment>
<comment type="subcellular location">
    <molecule>Helicase</molecule>
    <subcellularLocation>
        <location evidence="30">Host endoplasmic reticulum-Golgi intermediate compartment</location>
    </subcellularLocation>
    <text>The helicase interacts with the N protein in membranous complexes and colocalizes with sites of synthesis of new viral RNA.</text>
</comment>
<comment type="subcellular location">
    <molecule>Proofreading exoribonuclease</molecule>
    <subcellularLocation>
        <location evidence="5">Host cytoplasm</location>
    </subcellularLocation>
    <subcellularLocation>
        <location evidence="5">Host endoplasmic reticulum</location>
    </subcellularLocation>
</comment>
<comment type="subcellular location">
    <molecule>Uridylate-specific endoribonuclease</molecule>
    <subcellularLocation>
        <location evidence="5">Host cytoplasm</location>
    </subcellularLocation>
    <subcellularLocation>
        <location evidence="5">Host endoplasmic reticulum</location>
    </subcellularLocation>
</comment>
<comment type="alternative products">
    <event type="ribosomal frameshifting"/>
    <isoform>
        <id>P0C6Y2-1</id>
        <name>Replicase polyprotein 1ab</name>
        <name>pp1ab</name>
        <sequence type="displayed"/>
    </isoform>
    <isoform>
        <id>P0C6V4-1</id>
        <name>Replicase polyprotein 1a</name>
        <name>pp1a</name>
        <name>ORF1a polyprotein</name>
        <sequence type="external"/>
    </isoform>
    <text evidence="30">Isoform Replicase polyprotein 1ab is produced by -1 ribosomal frameshifting at the 1a-1b genes boundary. Isoform Replicase polyprotein 1a is produced by conventional translation.</text>
</comment>
<comment type="domain">
    <molecule>Papain-like protease</molecule>
    <text evidence="2">The hydrophobic region HD1 probably mediates the membrane association of the replication complex.</text>
</comment>
<comment type="domain">
    <molecule>Non-structural protein 4</molecule>
    <text evidence="2">The hydrophobic region HD2 probably mediates the membrane association of the replication complex.</text>
</comment>
<comment type="domain">
    <molecule>Non-structural protein 6</molecule>
    <text evidence="2">The hydrophobic region HD3 probably mediates the membrane association of the replication complex.</text>
</comment>
<comment type="PTM">
    <molecule>Isoform Replicase polyprotein 1ab</molecule>
    <text evidence="2">Specific enzymatic cleavages in vivo by its own proteases yield mature proteins (By similarity). 3C-like proteinase nsp5 liberates nsps 6-16 from the polyprotein (By similarity). Papain-like and 3C-like proteinases are autocatalytically processed.</text>
</comment>
<comment type="PTM">
    <molecule>Non-structural protein 4</molecule>
    <text evidence="3">N-glycosylated.</text>
</comment>
<comment type="similarity">
    <text evidence="30">Belongs to the coronaviruses polyprotein 1ab family.</text>
</comment>
<comment type="sequence caution" evidence="30">
    <conflict type="erroneous gene model prediction">
        <sequence resource="EMBL-CDS" id="CAC39112"/>
    </conflict>
</comment>
<organism>
    <name type="scientific">Avian infectious bronchitis virus (strain Beaudette CK)</name>
    <name type="common">IBV</name>
    <dbReference type="NCBI Taxonomy" id="160235"/>
    <lineage>
        <taxon>Viruses</taxon>
        <taxon>Riboviria</taxon>
        <taxon>Orthornavirae</taxon>
        <taxon>Pisuviricota</taxon>
        <taxon>Pisoniviricetes</taxon>
        <taxon>Nidovirales</taxon>
        <taxon>Cornidovirineae</taxon>
        <taxon>Coronaviridae</taxon>
        <taxon>Orthocoronavirinae</taxon>
        <taxon>Gammacoronavirus</taxon>
        <taxon>Igacovirus</taxon>
        <taxon>Avian coronavirus</taxon>
    </lineage>
</organism>
<protein>
    <recommendedName>
        <fullName>Replicase polyprotein 1ab</fullName>
        <shortName>pp1ab</shortName>
    </recommendedName>
    <alternativeName>
        <fullName>ORF1ab polyprotein</fullName>
    </alternativeName>
    <component>
        <recommendedName>
            <fullName>Non-structural protein 2</fullName>
            <shortName>nsp2</shortName>
        </recommendedName>
        <alternativeName>
            <fullName>p87</fullName>
        </alternativeName>
    </component>
    <component>
        <recommendedName>
            <fullName>Papain-like protease</fullName>
            <shortName>PL-PRO</shortName>
            <ecNumber evidence="2">3.4.19.12</ecNumber>
            <ecNumber evidence="2">3.4.22.-</ecNumber>
        </recommendedName>
        <alternativeName>
            <fullName>Non-structural protein 3</fullName>
            <shortName>nsp3</shortName>
        </alternativeName>
        <alternativeName>
            <fullName>p195</fullName>
        </alternativeName>
    </component>
    <component>
        <recommendedName>
            <fullName>Non-structural protein 4</fullName>
            <shortName>nsp4</shortName>
        </recommendedName>
        <alternativeName>
            <fullName>Peptide HD2</fullName>
        </alternativeName>
        <alternativeName>
            <fullName>p41</fullName>
        </alternativeName>
    </component>
    <component>
        <recommendedName>
            <fullName>3C-like proteinase</fullName>
            <shortName>3CL-PRO</shortName>
            <shortName>3CLp</shortName>
            <ecNumber evidence="2">3.4.22.-</ecNumber>
        </recommendedName>
        <alternativeName>
            <fullName>Main protease</fullName>
            <shortName>Mpro</shortName>
        </alternativeName>
        <alternativeName>
            <fullName>Non-structural protein 5</fullName>
            <shortName>nsp5</shortName>
        </alternativeName>
        <alternativeName>
            <fullName>p33</fullName>
        </alternativeName>
    </component>
    <component>
        <recommendedName>
            <fullName>Non-structural protein 6</fullName>
            <shortName>nsp6</shortName>
        </recommendedName>
        <alternativeName>
            <fullName>p34</fullName>
        </alternativeName>
    </component>
    <component>
        <recommendedName>
            <fullName>Non-structural protein 7</fullName>
            <shortName>nsp7</shortName>
        </recommendedName>
        <alternativeName>
            <fullName>p9</fullName>
        </alternativeName>
    </component>
    <component>
        <recommendedName>
            <fullName>Non-structural protein 8</fullName>
            <shortName>nsp8</shortName>
        </recommendedName>
        <alternativeName>
            <fullName>p24</fullName>
        </alternativeName>
    </component>
    <component>
        <recommendedName>
            <fullName>Viral protein genome-linked nsp9</fullName>
        </recommendedName>
        <alternativeName>
            <fullName>Non-structural protein 9</fullName>
            <shortName>nsp9</shortName>
        </alternativeName>
        <alternativeName>
            <fullName>RNA-capping enzyme subunit nsp9</fullName>
        </alternativeName>
        <alternativeName>
            <fullName>p10</fullName>
        </alternativeName>
    </component>
    <component>
        <recommendedName>
            <fullName>Non-structural protein 10</fullName>
            <shortName>nsp10</shortName>
        </recommendedName>
        <alternativeName>
            <fullName>Growth factor-like peptide</fullName>
            <shortName>GFL</shortName>
        </alternativeName>
        <alternativeName>
            <fullName>p16</fullName>
        </alternativeName>
    </component>
    <component>
        <recommendedName>
            <fullName>RNA-directed RNA polymerase nsp12</fullName>
            <shortName>Pol</shortName>
            <shortName>RdRp</shortName>
            <ecNumber>2.7.7.48</ecNumber>
            <ecNumber>2.7.7.50</ecNumber>
        </recommendedName>
        <alternativeName>
            <fullName>nsp12</fullName>
        </alternativeName>
        <alternativeName>
            <fullName>p100</fullName>
        </alternativeName>
    </component>
    <component>
        <recommendedName>
            <fullName>Helicase</fullName>
            <shortName>Hel</shortName>
            <ecNumber evidence="2">3.6.4.12</ecNumber>
            <ecNumber evidence="2">3.6.4.13</ecNumber>
        </recommendedName>
        <alternativeName>
            <fullName>nsp13</fullName>
        </alternativeName>
        <alternativeName>
            <fullName>p68</fullName>
        </alternativeName>
    </component>
    <component>
        <recommendedName>
            <fullName evidence="2">Proofreading exoribonuclease</fullName>
            <shortName>ExoN</shortName>
            <ecNumber>2.1.1.-</ecNumber>
            <ecNumber>3.1.13.-</ecNumber>
        </recommendedName>
        <alternativeName>
            <fullName evidence="2">Guanine-N7 methyltransferase</fullName>
        </alternativeName>
        <alternativeName>
            <fullName>Non-structural protein 14</fullName>
            <shortName>nsp14</shortName>
        </alternativeName>
        <alternativeName>
            <fullName>p58</fullName>
        </alternativeName>
    </component>
    <component>
        <recommendedName>
            <fullName>Uridylate-specific endoribonuclease</fullName>
            <ecNumber evidence="2">4.6.1.-</ecNumber>
        </recommendedName>
        <alternativeName>
            <fullName>NendoU</fullName>
        </alternativeName>
        <alternativeName>
            <fullName>Non-structural protein 15</fullName>
            <shortName>nsp15</shortName>
        </alternativeName>
        <alternativeName>
            <fullName>p39</fullName>
        </alternativeName>
    </component>
    <component>
        <recommendedName>
            <fullName>2'-O-methyl transferase</fullName>
            <ecNumber>2.1.1.57</ecNumber>
        </recommendedName>
        <alternativeName>
            <fullName>Non-structural protein 16</fullName>
            <shortName>nsp16</shortName>
        </alternativeName>
        <alternativeName>
            <fullName>p35</fullName>
        </alternativeName>
    </component>
</protein>